<proteinExistence type="evidence at protein level"/>
<gene>
    <name type="primary">TCF7L2</name>
    <name type="synonym">TCF4</name>
</gene>
<accession>Q9NQB0</accession>
<accession>B4DRJ8</accession>
<accession>B9X074</accession>
<accession>C6ZRJ8</accession>
<accession>C6ZRK0</accession>
<accession>E2GH14</accession>
<accession>E2GH19</accession>
<accession>E2GH20</accession>
<accession>E2GH24</accession>
<accession>E2GH25</accession>
<accession>E9PFH9</accession>
<accession>F8W742</accession>
<accession>F8W7T5</accession>
<accession>O00185</accession>
<accession>Q9NQB1</accession>
<accession>Q9NQB2</accession>
<accession>Q9NQB3</accession>
<accession>Q9NQB4</accession>
<accession>Q9NQB5</accession>
<accession>Q9NQB6</accession>
<accession>Q9NQB7</accession>
<accession>Q9ULC2</accession>
<organism>
    <name type="scientific">Homo sapiens</name>
    <name type="common">Human</name>
    <dbReference type="NCBI Taxonomy" id="9606"/>
    <lineage>
        <taxon>Eukaryota</taxon>
        <taxon>Metazoa</taxon>
        <taxon>Chordata</taxon>
        <taxon>Craniata</taxon>
        <taxon>Vertebrata</taxon>
        <taxon>Euteleostomi</taxon>
        <taxon>Mammalia</taxon>
        <taxon>Eutheria</taxon>
        <taxon>Euarchontoglires</taxon>
        <taxon>Primates</taxon>
        <taxon>Haplorrhini</taxon>
        <taxon>Catarrhini</taxon>
        <taxon>Hominidae</taxon>
        <taxon>Homo</taxon>
    </lineage>
</organism>
<dbReference type="EMBL" id="Y11306">
    <property type="protein sequence ID" value="CAA72166.2"/>
    <property type="molecule type" value="mRNA"/>
</dbReference>
<dbReference type="EMBL" id="AJ270770">
    <property type="protein sequence ID" value="CAB97212.1"/>
    <property type="molecule type" value="Genomic_DNA"/>
</dbReference>
<dbReference type="EMBL" id="AJ270771">
    <property type="protein sequence ID" value="CAB97212.1"/>
    <property type="status" value="JOINED"/>
    <property type="molecule type" value="Genomic_DNA"/>
</dbReference>
<dbReference type="EMBL" id="AJ270772">
    <property type="protein sequence ID" value="CAB97212.1"/>
    <property type="status" value="JOINED"/>
    <property type="molecule type" value="Genomic_DNA"/>
</dbReference>
<dbReference type="EMBL" id="AJ270773">
    <property type="protein sequence ID" value="CAB97212.1"/>
    <property type="status" value="JOINED"/>
    <property type="molecule type" value="Genomic_DNA"/>
</dbReference>
<dbReference type="EMBL" id="AJ270774">
    <property type="protein sequence ID" value="CAB97212.1"/>
    <property type="status" value="JOINED"/>
    <property type="molecule type" value="Genomic_DNA"/>
</dbReference>
<dbReference type="EMBL" id="AJ270775">
    <property type="protein sequence ID" value="CAB97212.1"/>
    <property type="status" value="JOINED"/>
    <property type="molecule type" value="Genomic_DNA"/>
</dbReference>
<dbReference type="EMBL" id="AJ270776">
    <property type="protein sequence ID" value="CAB97212.1"/>
    <property type="status" value="JOINED"/>
    <property type="molecule type" value="Genomic_DNA"/>
</dbReference>
<dbReference type="EMBL" id="AJ270778">
    <property type="protein sequence ID" value="CAB97212.1"/>
    <property type="status" value="JOINED"/>
    <property type="molecule type" value="Genomic_DNA"/>
</dbReference>
<dbReference type="EMBL" id="AJ270770">
    <property type="protein sequence ID" value="CAB97213.1"/>
    <property type="molecule type" value="Genomic_DNA"/>
</dbReference>
<dbReference type="EMBL" id="AJ270771">
    <property type="protein sequence ID" value="CAB97213.1"/>
    <property type="status" value="JOINED"/>
    <property type="molecule type" value="Genomic_DNA"/>
</dbReference>
<dbReference type="EMBL" id="AJ270772">
    <property type="protein sequence ID" value="CAB97213.1"/>
    <property type="status" value="JOINED"/>
    <property type="molecule type" value="Genomic_DNA"/>
</dbReference>
<dbReference type="EMBL" id="AJ270773">
    <property type="protein sequence ID" value="CAB97213.1"/>
    <property type="status" value="JOINED"/>
    <property type="molecule type" value="Genomic_DNA"/>
</dbReference>
<dbReference type="EMBL" id="AJ270774">
    <property type="protein sequence ID" value="CAB97213.1"/>
    <property type="status" value="JOINED"/>
    <property type="molecule type" value="Genomic_DNA"/>
</dbReference>
<dbReference type="EMBL" id="AJ270775">
    <property type="protein sequence ID" value="CAB97213.1"/>
    <property type="status" value="JOINED"/>
    <property type="molecule type" value="Genomic_DNA"/>
</dbReference>
<dbReference type="EMBL" id="AJ270776">
    <property type="protein sequence ID" value="CAB97213.1"/>
    <property type="status" value="JOINED"/>
    <property type="molecule type" value="Genomic_DNA"/>
</dbReference>
<dbReference type="EMBL" id="AJ270778">
    <property type="protein sequence ID" value="CAB97213.1"/>
    <property type="status" value="JOINED"/>
    <property type="molecule type" value="Genomic_DNA"/>
</dbReference>
<dbReference type="EMBL" id="AJ270770">
    <property type="protein sequence ID" value="CAB97214.1"/>
    <property type="molecule type" value="Genomic_DNA"/>
</dbReference>
<dbReference type="EMBL" id="AJ270771">
    <property type="protein sequence ID" value="CAB97214.1"/>
    <property type="status" value="JOINED"/>
    <property type="molecule type" value="Genomic_DNA"/>
</dbReference>
<dbReference type="EMBL" id="AJ270772">
    <property type="protein sequence ID" value="CAB97214.1"/>
    <property type="status" value="JOINED"/>
    <property type="molecule type" value="Genomic_DNA"/>
</dbReference>
<dbReference type="EMBL" id="AJ270773">
    <property type="protein sequence ID" value="CAB97214.1"/>
    <property type="status" value="JOINED"/>
    <property type="molecule type" value="Genomic_DNA"/>
</dbReference>
<dbReference type="EMBL" id="AJ270774">
    <property type="protein sequence ID" value="CAB97214.1"/>
    <property type="status" value="JOINED"/>
    <property type="molecule type" value="Genomic_DNA"/>
</dbReference>
<dbReference type="EMBL" id="AJ270775">
    <property type="protein sequence ID" value="CAB97214.1"/>
    <property type="status" value="JOINED"/>
    <property type="molecule type" value="Genomic_DNA"/>
</dbReference>
<dbReference type="EMBL" id="AJ270777">
    <property type="protein sequence ID" value="CAB97214.1"/>
    <property type="status" value="JOINED"/>
    <property type="molecule type" value="Genomic_DNA"/>
</dbReference>
<dbReference type="EMBL" id="AJ270778">
    <property type="protein sequence ID" value="CAB97214.1"/>
    <property type="status" value="JOINED"/>
    <property type="molecule type" value="Genomic_DNA"/>
</dbReference>
<dbReference type="EMBL" id="AJ270770">
    <property type="protein sequence ID" value="CAB97215.1"/>
    <property type="molecule type" value="Genomic_DNA"/>
</dbReference>
<dbReference type="EMBL" id="AJ270771">
    <property type="protein sequence ID" value="CAB97215.1"/>
    <property type="status" value="JOINED"/>
    <property type="molecule type" value="Genomic_DNA"/>
</dbReference>
<dbReference type="EMBL" id="AJ270772">
    <property type="protein sequence ID" value="CAB97215.1"/>
    <property type="status" value="JOINED"/>
    <property type="molecule type" value="Genomic_DNA"/>
</dbReference>
<dbReference type="EMBL" id="AJ270773">
    <property type="protein sequence ID" value="CAB97215.1"/>
    <property type="status" value="JOINED"/>
    <property type="molecule type" value="Genomic_DNA"/>
</dbReference>
<dbReference type="EMBL" id="AJ270774">
    <property type="protein sequence ID" value="CAB97215.1"/>
    <property type="status" value="JOINED"/>
    <property type="molecule type" value="Genomic_DNA"/>
</dbReference>
<dbReference type="EMBL" id="AJ270775">
    <property type="protein sequence ID" value="CAB97215.1"/>
    <property type="status" value="JOINED"/>
    <property type="molecule type" value="Genomic_DNA"/>
</dbReference>
<dbReference type="EMBL" id="AJ270777">
    <property type="protein sequence ID" value="CAB97215.1"/>
    <property type="status" value="JOINED"/>
    <property type="molecule type" value="Genomic_DNA"/>
</dbReference>
<dbReference type="EMBL" id="AJ270778">
    <property type="protein sequence ID" value="CAB97215.1"/>
    <property type="status" value="JOINED"/>
    <property type="molecule type" value="Genomic_DNA"/>
</dbReference>
<dbReference type="EMBL" id="AJ270770">
    <property type="protein sequence ID" value="CAB97216.1"/>
    <property type="molecule type" value="Genomic_DNA"/>
</dbReference>
<dbReference type="EMBL" id="AJ270771">
    <property type="protein sequence ID" value="CAB97216.1"/>
    <property type="status" value="JOINED"/>
    <property type="molecule type" value="Genomic_DNA"/>
</dbReference>
<dbReference type="EMBL" id="AJ270772">
    <property type="protein sequence ID" value="CAB97216.1"/>
    <property type="status" value="JOINED"/>
    <property type="molecule type" value="Genomic_DNA"/>
</dbReference>
<dbReference type="EMBL" id="AJ270773">
    <property type="protein sequence ID" value="CAB97216.1"/>
    <property type="status" value="JOINED"/>
    <property type="molecule type" value="Genomic_DNA"/>
</dbReference>
<dbReference type="EMBL" id="AJ270774">
    <property type="protein sequence ID" value="CAB97216.1"/>
    <property type="status" value="JOINED"/>
    <property type="molecule type" value="Genomic_DNA"/>
</dbReference>
<dbReference type="EMBL" id="AJ270775">
    <property type="protein sequence ID" value="CAB97216.1"/>
    <property type="status" value="JOINED"/>
    <property type="molecule type" value="Genomic_DNA"/>
</dbReference>
<dbReference type="EMBL" id="AJ270778">
    <property type="protein sequence ID" value="CAB97216.1"/>
    <property type="status" value="JOINED"/>
    <property type="molecule type" value="Genomic_DNA"/>
</dbReference>
<dbReference type="EMBL" id="AJ270770">
    <property type="protein sequence ID" value="CAB97217.1"/>
    <property type="molecule type" value="Genomic_DNA"/>
</dbReference>
<dbReference type="EMBL" id="AJ270771">
    <property type="protein sequence ID" value="CAB97217.1"/>
    <property type="status" value="JOINED"/>
    <property type="molecule type" value="Genomic_DNA"/>
</dbReference>
<dbReference type="EMBL" id="AJ270772">
    <property type="protein sequence ID" value="CAB97217.1"/>
    <property type="status" value="JOINED"/>
    <property type="molecule type" value="Genomic_DNA"/>
</dbReference>
<dbReference type="EMBL" id="AJ270773">
    <property type="protein sequence ID" value="CAB97217.1"/>
    <property type="status" value="JOINED"/>
    <property type="molecule type" value="Genomic_DNA"/>
</dbReference>
<dbReference type="EMBL" id="AJ270774">
    <property type="protein sequence ID" value="CAB97217.1"/>
    <property type="status" value="JOINED"/>
    <property type="molecule type" value="Genomic_DNA"/>
</dbReference>
<dbReference type="EMBL" id="AJ270775">
    <property type="protein sequence ID" value="CAB97217.1"/>
    <property type="status" value="JOINED"/>
    <property type="molecule type" value="Genomic_DNA"/>
</dbReference>
<dbReference type="EMBL" id="AJ270778">
    <property type="protein sequence ID" value="CAB97217.1"/>
    <property type="status" value="JOINED"/>
    <property type="molecule type" value="Genomic_DNA"/>
</dbReference>
<dbReference type="EMBL" id="AJ270770">
    <property type="protein sequence ID" value="CAB97218.1"/>
    <property type="molecule type" value="Genomic_DNA"/>
</dbReference>
<dbReference type="EMBL" id="AJ270771">
    <property type="protein sequence ID" value="CAB97218.1"/>
    <property type="status" value="JOINED"/>
    <property type="molecule type" value="Genomic_DNA"/>
</dbReference>
<dbReference type="EMBL" id="AJ270772">
    <property type="protein sequence ID" value="CAB97218.1"/>
    <property type="status" value="JOINED"/>
    <property type="molecule type" value="Genomic_DNA"/>
</dbReference>
<dbReference type="EMBL" id="AJ270773">
    <property type="protein sequence ID" value="CAB97218.1"/>
    <property type="status" value="JOINED"/>
    <property type="molecule type" value="Genomic_DNA"/>
</dbReference>
<dbReference type="EMBL" id="AJ270774">
    <property type="protein sequence ID" value="CAB97218.1"/>
    <property type="status" value="JOINED"/>
    <property type="molecule type" value="Genomic_DNA"/>
</dbReference>
<dbReference type="EMBL" id="AJ270775">
    <property type="protein sequence ID" value="CAB97218.1"/>
    <property type="status" value="JOINED"/>
    <property type="molecule type" value="Genomic_DNA"/>
</dbReference>
<dbReference type="EMBL" id="AJ270776">
    <property type="protein sequence ID" value="CAB97218.1"/>
    <property type="status" value="JOINED"/>
    <property type="molecule type" value="Genomic_DNA"/>
</dbReference>
<dbReference type="EMBL" id="AJ270777">
    <property type="protein sequence ID" value="CAB97218.1"/>
    <property type="status" value="JOINED"/>
    <property type="molecule type" value="Genomic_DNA"/>
</dbReference>
<dbReference type="EMBL" id="AJ270770">
    <property type="protein sequence ID" value="CAB97219.1"/>
    <property type="molecule type" value="Genomic_DNA"/>
</dbReference>
<dbReference type="EMBL" id="AJ270771">
    <property type="protein sequence ID" value="CAB97219.1"/>
    <property type="status" value="JOINED"/>
    <property type="molecule type" value="Genomic_DNA"/>
</dbReference>
<dbReference type="EMBL" id="AJ270772">
    <property type="protein sequence ID" value="CAB97219.1"/>
    <property type="status" value="JOINED"/>
    <property type="molecule type" value="Genomic_DNA"/>
</dbReference>
<dbReference type="EMBL" id="AJ270773">
    <property type="protein sequence ID" value="CAB97219.1"/>
    <property type="status" value="JOINED"/>
    <property type="molecule type" value="Genomic_DNA"/>
</dbReference>
<dbReference type="EMBL" id="AJ270774">
    <property type="protein sequence ID" value="CAB97219.1"/>
    <property type="status" value="JOINED"/>
    <property type="molecule type" value="Genomic_DNA"/>
</dbReference>
<dbReference type="EMBL" id="AJ270775">
    <property type="protein sequence ID" value="CAB97219.1"/>
    <property type="status" value="JOINED"/>
    <property type="molecule type" value="Genomic_DNA"/>
</dbReference>
<dbReference type="EMBL" id="AJ270776">
    <property type="protein sequence ID" value="CAB97219.1"/>
    <property type="status" value="JOINED"/>
    <property type="molecule type" value="Genomic_DNA"/>
</dbReference>
<dbReference type="EMBL" id="AJ270777">
    <property type="protein sequence ID" value="CAB97219.1"/>
    <property type="status" value="JOINED"/>
    <property type="molecule type" value="Genomic_DNA"/>
</dbReference>
<dbReference type="EMBL" id="FJ010167">
    <property type="protein sequence ID" value="ACI28525.1"/>
    <property type="molecule type" value="mRNA"/>
</dbReference>
<dbReference type="EMBL" id="FJ010169">
    <property type="protein sequence ID" value="ACI28527.1"/>
    <property type="molecule type" value="mRNA"/>
</dbReference>
<dbReference type="EMBL" id="FJ010172">
    <property type="protein sequence ID" value="ACI28530.1"/>
    <property type="molecule type" value="mRNA"/>
</dbReference>
<dbReference type="EMBL" id="HM352839">
    <property type="protein sequence ID" value="ADK35175.1"/>
    <property type="molecule type" value="mRNA"/>
</dbReference>
<dbReference type="EMBL" id="HM352842">
    <property type="protein sequence ID" value="ADK35178.1"/>
    <property type="molecule type" value="mRNA"/>
</dbReference>
<dbReference type="EMBL" id="HM352844">
    <property type="protein sequence ID" value="ADK35180.1"/>
    <property type="molecule type" value="mRNA"/>
</dbReference>
<dbReference type="EMBL" id="HM352845">
    <property type="protein sequence ID" value="ADK35187.1"/>
    <property type="molecule type" value="mRNA"/>
</dbReference>
<dbReference type="EMBL" id="HM352846">
    <property type="protein sequence ID" value="ADK35181.1"/>
    <property type="molecule type" value="mRNA"/>
</dbReference>
<dbReference type="EMBL" id="HM352847">
    <property type="protein sequence ID" value="ADK35182.1"/>
    <property type="molecule type" value="mRNA"/>
</dbReference>
<dbReference type="EMBL" id="HM352849">
    <property type="protein sequence ID" value="ADK35184.1"/>
    <property type="molecule type" value="mRNA"/>
</dbReference>
<dbReference type="EMBL" id="HM352850">
    <property type="protein sequence ID" value="ADK35185.1"/>
    <property type="molecule type" value="mRNA"/>
</dbReference>
<dbReference type="EMBL" id="AB440195">
    <property type="protein sequence ID" value="BAH24004.1"/>
    <property type="molecule type" value="mRNA"/>
</dbReference>
<dbReference type="EMBL" id="AK299295">
    <property type="protein sequence ID" value="BAG61310.1"/>
    <property type="molecule type" value="mRNA"/>
</dbReference>
<dbReference type="EMBL" id="AL135792">
    <property type="status" value="NOT_ANNOTATED_CDS"/>
    <property type="molecule type" value="Genomic_DNA"/>
</dbReference>
<dbReference type="EMBL" id="AL158212">
    <property type="status" value="NOT_ANNOTATED_CDS"/>
    <property type="molecule type" value="Genomic_DNA"/>
</dbReference>
<dbReference type="EMBL" id="AL445486">
    <property type="status" value="NOT_ANNOTATED_CDS"/>
    <property type="molecule type" value="Genomic_DNA"/>
</dbReference>
<dbReference type="EMBL" id="AL451084">
    <property type="status" value="NOT_ANNOTATED_CDS"/>
    <property type="molecule type" value="Genomic_DNA"/>
</dbReference>
<dbReference type="EMBL" id="CH471066">
    <property type="protein sequence ID" value="EAW49513.1"/>
    <property type="molecule type" value="Genomic_DNA"/>
</dbReference>
<dbReference type="EMBL" id="CH471066">
    <property type="protein sequence ID" value="EAW49515.1"/>
    <property type="molecule type" value="Genomic_DNA"/>
</dbReference>
<dbReference type="EMBL" id="CH471066">
    <property type="protein sequence ID" value="EAW49516.1"/>
    <property type="molecule type" value="Genomic_DNA"/>
</dbReference>
<dbReference type="EMBL" id="BC032656">
    <property type="protein sequence ID" value="AAH32656.1"/>
    <property type="molecule type" value="mRNA"/>
</dbReference>
<dbReference type="EMBL" id="AB034691">
    <property type="protein sequence ID" value="BAA86225.1"/>
    <property type="molecule type" value="mRNA"/>
</dbReference>
<dbReference type="CCDS" id="CCDS53577.1">
    <molecule id="Q9NQB0-7"/>
</dbReference>
<dbReference type="CCDS" id="CCDS53578.1">
    <molecule id="Q9NQB0-11"/>
</dbReference>
<dbReference type="CCDS" id="CCDS55729.1">
    <molecule id="Q9NQB0-12"/>
</dbReference>
<dbReference type="CCDS" id="CCDS7576.1">
    <molecule id="Q9NQB0-8"/>
</dbReference>
<dbReference type="CCDS" id="CCDS86148.1">
    <molecule id="Q9NQB0-6"/>
</dbReference>
<dbReference type="CCDS" id="CCDS91348.1">
    <molecule id="Q9NQB0-1"/>
</dbReference>
<dbReference type="PIR" id="S22807">
    <property type="entry name" value="S22807"/>
</dbReference>
<dbReference type="RefSeq" id="NP_001139746.1">
    <molecule id="Q9NQB0-7"/>
    <property type="nucleotide sequence ID" value="NM_001146274.2"/>
</dbReference>
<dbReference type="RefSeq" id="NP_001139755.1">
    <molecule id="Q9NQB0-11"/>
    <property type="nucleotide sequence ID" value="NM_001146283.2"/>
</dbReference>
<dbReference type="RefSeq" id="NP_001139756.1">
    <molecule id="Q9NQB0-10"/>
    <property type="nucleotide sequence ID" value="NM_001146284.2"/>
</dbReference>
<dbReference type="RefSeq" id="NP_001139758.1">
    <molecule id="Q9NQB0-14"/>
    <property type="nucleotide sequence ID" value="NM_001146286.2"/>
</dbReference>
<dbReference type="RefSeq" id="NP_001185455.1">
    <molecule id="Q9NQB0-13"/>
    <property type="nucleotide sequence ID" value="NM_001198526.2"/>
</dbReference>
<dbReference type="RefSeq" id="NP_001185457.1">
    <molecule id="Q9NQB0-12"/>
    <property type="nucleotide sequence ID" value="NM_001198528.2"/>
</dbReference>
<dbReference type="RefSeq" id="NP_001185460.1">
    <molecule id="Q9NQB0-9"/>
    <property type="nucleotide sequence ID" value="NM_001198531.2"/>
</dbReference>
<dbReference type="RefSeq" id="NP_001350430.1">
    <molecule id="Q9NQB0-6"/>
    <property type="nucleotide sequence ID" value="NM_001363501.2"/>
</dbReference>
<dbReference type="RefSeq" id="NP_001354872.1">
    <molecule id="Q9NQB0-1"/>
    <property type="nucleotide sequence ID" value="NM_001367943.1"/>
</dbReference>
<dbReference type="RefSeq" id="NP_110383.2">
    <molecule id="Q9NQB0-8"/>
    <property type="nucleotide sequence ID" value="NM_030756.5"/>
</dbReference>
<dbReference type="RefSeq" id="XP_005270141.1">
    <property type="nucleotide sequence ID" value="XM_005270084.1"/>
</dbReference>
<dbReference type="RefSeq" id="XP_005270146.1">
    <property type="nucleotide sequence ID" value="XM_005270089.1"/>
</dbReference>
<dbReference type="RefSeq" id="XP_005270153.1">
    <property type="nucleotide sequence ID" value="XM_005270096.2"/>
</dbReference>
<dbReference type="RefSeq" id="XP_005270160.1">
    <property type="nucleotide sequence ID" value="XM_005270103.1"/>
</dbReference>
<dbReference type="RefSeq" id="XP_016872081.1">
    <property type="nucleotide sequence ID" value="XM_017016592.1"/>
</dbReference>
<dbReference type="RefSeq" id="XP_016872082.1">
    <property type="nucleotide sequence ID" value="XM_017016593.1"/>
</dbReference>
<dbReference type="PDB" id="1JDH">
    <property type="method" value="X-ray"/>
    <property type="resolution" value="1.90 A"/>
    <property type="chains" value="B=12-49"/>
</dbReference>
<dbReference type="PDB" id="1JPW">
    <property type="method" value="X-ray"/>
    <property type="resolution" value="2.50 A"/>
    <property type="chains" value="D/E/F=6-54"/>
</dbReference>
<dbReference type="PDB" id="2GL7">
    <property type="method" value="X-ray"/>
    <property type="resolution" value="2.60 A"/>
    <property type="chains" value="B/E=1-53"/>
</dbReference>
<dbReference type="PDBsum" id="1JDH"/>
<dbReference type="PDBsum" id="1JPW"/>
<dbReference type="PDBsum" id="2GL7"/>
<dbReference type="SMR" id="Q9NQB0"/>
<dbReference type="BioGRID" id="112795">
    <property type="interactions" value="284"/>
</dbReference>
<dbReference type="CORUM" id="Q9NQB0"/>
<dbReference type="DIP" id="DIP-36236N"/>
<dbReference type="FunCoup" id="Q9NQB0">
    <property type="interactions" value="3586"/>
</dbReference>
<dbReference type="IntAct" id="Q9NQB0">
    <property type="interactions" value="228"/>
</dbReference>
<dbReference type="MINT" id="Q9NQB0"/>
<dbReference type="STRING" id="9606.ENSP00000486891"/>
<dbReference type="BindingDB" id="Q9NQB0"/>
<dbReference type="ChEMBL" id="CHEMBL3038511"/>
<dbReference type="GlyGen" id="Q9NQB0">
    <property type="glycosylation" value="1 site, 1 O-linked glycan (1 site)"/>
</dbReference>
<dbReference type="iPTMnet" id="Q9NQB0"/>
<dbReference type="PhosphoSitePlus" id="Q9NQB0"/>
<dbReference type="BioMuta" id="TCF7L2"/>
<dbReference type="DMDM" id="29337146"/>
<dbReference type="jPOST" id="Q9NQB0"/>
<dbReference type="MassIVE" id="Q9NQB0"/>
<dbReference type="PaxDb" id="9606-ENSP00000358404"/>
<dbReference type="PeptideAtlas" id="Q9NQB0"/>
<dbReference type="ProteomicsDB" id="15216"/>
<dbReference type="ProteomicsDB" id="29884"/>
<dbReference type="ProteomicsDB" id="30005"/>
<dbReference type="ProteomicsDB" id="82120">
    <molecule id="Q9NQB0-1"/>
</dbReference>
<dbReference type="ProteomicsDB" id="82121">
    <molecule id="Q9NQB0-10"/>
</dbReference>
<dbReference type="ProteomicsDB" id="82122">
    <molecule id="Q9NQB0-2"/>
</dbReference>
<dbReference type="ProteomicsDB" id="82123">
    <molecule id="Q9NQB0-3"/>
</dbReference>
<dbReference type="ProteomicsDB" id="82124">
    <molecule id="Q9NQB0-4"/>
</dbReference>
<dbReference type="ProteomicsDB" id="82125">
    <molecule id="Q9NQB0-5"/>
</dbReference>
<dbReference type="ProteomicsDB" id="82126">
    <molecule id="Q9NQB0-6"/>
</dbReference>
<dbReference type="ProteomicsDB" id="82127">
    <molecule id="Q9NQB0-7"/>
</dbReference>
<dbReference type="ProteomicsDB" id="82128">
    <molecule id="Q9NQB0-8"/>
</dbReference>
<dbReference type="ProteomicsDB" id="82129">
    <molecule id="Q9NQB0-9"/>
</dbReference>
<dbReference type="Pumba" id="Q9NQB0"/>
<dbReference type="Antibodypedia" id="31824">
    <property type="antibodies" value="464 antibodies from 35 providers"/>
</dbReference>
<dbReference type="DNASU" id="6934"/>
<dbReference type="Ensembl" id="ENST00000352065.10">
    <molecule id="Q9NQB0-12"/>
    <property type="protein sequence ID" value="ENSP00000344823.5"/>
    <property type="gene ID" value="ENSG00000148737.18"/>
</dbReference>
<dbReference type="Ensembl" id="ENST00000355717.9">
    <molecule id="Q9NQB0-11"/>
    <property type="protein sequence ID" value="ENSP00000347949.4"/>
    <property type="gene ID" value="ENSG00000148737.18"/>
</dbReference>
<dbReference type="Ensembl" id="ENST00000355995.9">
    <molecule id="Q9NQB0-1"/>
    <property type="protein sequence ID" value="ENSP00000348274.4"/>
    <property type="gene ID" value="ENSG00000148737.18"/>
</dbReference>
<dbReference type="Ensembl" id="ENST00000369397.8">
    <molecule id="Q9NQB0-8"/>
    <property type="protein sequence ID" value="ENSP00000358404.4"/>
    <property type="gene ID" value="ENSG00000148737.18"/>
</dbReference>
<dbReference type="Ensembl" id="ENST00000538897.5">
    <molecule id="Q9NQB0-6"/>
    <property type="protein sequence ID" value="ENSP00000446172.1"/>
    <property type="gene ID" value="ENSG00000148737.18"/>
</dbReference>
<dbReference type="Ensembl" id="ENST00000627217.3">
    <molecule id="Q9NQB0-7"/>
    <property type="protein sequence ID" value="ENSP00000486891.1"/>
    <property type="gene ID" value="ENSG00000148737.18"/>
</dbReference>
<dbReference type="GeneID" id="6934"/>
<dbReference type="KEGG" id="hsa:6934"/>
<dbReference type="MANE-Select" id="ENST00000355995.9">
    <property type="protein sequence ID" value="ENSP00000348274.4"/>
    <property type="RefSeq nucleotide sequence ID" value="NM_001367943.1"/>
    <property type="RefSeq protein sequence ID" value="NP_001354872.1"/>
</dbReference>
<dbReference type="UCSC" id="uc001lac.5">
    <molecule id="Q9NQB0-1"/>
    <property type="organism name" value="human"/>
</dbReference>
<dbReference type="AGR" id="HGNC:11641"/>
<dbReference type="CTD" id="6934"/>
<dbReference type="DisGeNET" id="6934"/>
<dbReference type="GeneCards" id="TCF7L2"/>
<dbReference type="HGNC" id="HGNC:11641">
    <property type="gene designation" value="TCF7L2"/>
</dbReference>
<dbReference type="HPA" id="ENSG00000148737">
    <property type="expression patterns" value="Low tissue specificity"/>
</dbReference>
<dbReference type="MalaCards" id="TCF7L2"/>
<dbReference type="MIM" id="125853">
    <property type="type" value="phenotype"/>
</dbReference>
<dbReference type="MIM" id="602228">
    <property type="type" value="gene"/>
</dbReference>
<dbReference type="neXtProt" id="NX_Q9NQB0"/>
<dbReference type="OpenTargets" id="ENSG00000148737"/>
<dbReference type="Orphanet" id="528084">
    <property type="disease" value="Non-specific syndromic intellectual disability"/>
</dbReference>
<dbReference type="PharmGKB" id="PA36394"/>
<dbReference type="VEuPathDB" id="HostDB:ENSG00000148737"/>
<dbReference type="eggNOG" id="KOG3248">
    <property type="taxonomic scope" value="Eukaryota"/>
</dbReference>
<dbReference type="GeneTree" id="ENSGT00940000155535"/>
<dbReference type="HOGENOM" id="CLU_013229_5_0_1"/>
<dbReference type="InParanoid" id="Q9NQB0"/>
<dbReference type="OMA" id="SLPPITX"/>
<dbReference type="OrthoDB" id="2307332at2759"/>
<dbReference type="PAN-GO" id="Q9NQB0">
    <property type="GO annotations" value="6 GO annotations based on evolutionary models"/>
</dbReference>
<dbReference type="PhylomeDB" id="Q9NQB0"/>
<dbReference type="TreeFam" id="TF318448"/>
<dbReference type="PathwayCommons" id="Q9NQB0"/>
<dbReference type="Reactome" id="R-HSA-201722">
    <property type="pathway name" value="Formation of the beta-catenin:TCF transactivating complex"/>
</dbReference>
<dbReference type="Reactome" id="R-HSA-3769402">
    <property type="pathway name" value="Deactivation of the beta-catenin transactivating complex"/>
</dbReference>
<dbReference type="Reactome" id="R-HSA-381771">
    <property type="pathway name" value="Synthesis, secretion, and inactivation of Glucagon-like Peptide-1 (GLP-1)"/>
</dbReference>
<dbReference type="Reactome" id="R-HSA-4086398">
    <property type="pathway name" value="Ca2+ pathway"/>
</dbReference>
<dbReference type="Reactome" id="R-HSA-4411364">
    <property type="pathway name" value="Binding of TCF/LEF:CTNNB1 to target gene promoters"/>
</dbReference>
<dbReference type="Reactome" id="R-HSA-4641265">
    <property type="pathway name" value="Repression of WNT target genes"/>
</dbReference>
<dbReference type="Reactome" id="R-HSA-5339700">
    <property type="pathway name" value="Signaling by TCF7L2 mutants"/>
</dbReference>
<dbReference type="Reactome" id="R-HSA-8853884">
    <property type="pathway name" value="Transcriptional Regulation by VENTX"/>
</dbReference>
<dbReference type="Reactome" id="R-HSA-8951430">
    <property type="pathway name" value="RUNX3 regulates WNT signaling"/>
</dbReference>
<dbReference type="Reactome" id="R-HSA-9823730">
    <property type="pathway name" value="Formation of definitive endoderm"/>
</dbReference>
<dbReference type="Reactome" id="R-HSA-9825892">
    <property type="pathway name" value="Regulation of MITF-M-dependent genes involved in cell cycle and proliferation"/>
</dbReference>
<dbReference type="SignaLink" id="Q9NQB0"/>
<dbReference type="SIGNOR" id="Q9NQB0"/>
<dbReference type="BioGRID-ORCS" id="6934">
    <property type="hits" value="73 hits in 1176 CRISPR screens"/>
</dbReference>
<dbReference type="CD-CODE" id="B5B9A610">
    <property type="entry name" value="PML body"/>
</dbReference>
<dbReference type="ChiTaRS" id="TCF7L2">
    <property type="organism name" value="human"/>
</dbReference>
<dbReference type="EvolutionaryTrace" id="Q9NQB0"/>
<dbReference type="GeneWiki" id="TCF7L2"/>
<dbReference type="GenomeRNAi" id="6934"/>
<dbReference type="Pharos" id="Q9NQB0">
    <property type="development level" value="Tbio"/>
</dbReference>
<dbReference type="PRO" id="PR:Q9NQB0"/>
<dbReference type="Proteomes" id="UP000005640">
    <property type="component" value="Chromosome 10"/>
</dbReference>
<dbReference type="RNAct" id="Q9NQB0">
    <property type="molecule type" value="protein"/>
</dbReference>
<dbReference type="Bgee" id="ENSG00000148737">
    <property type="expression patterns" value="Expressed in lateral nuclear group of thalamus and 198 other cell types or tissues"/>
</dbReference>
<dbReference type="ExpressionAtlas" id="Q9NQB0">
    <property type="expression patterns" value="baseline and differential"/>
</dbReference>
<dbReference type="GO" id="GO:1990907">
    <property type="term" value="C:beta-catenin-TCF complex"/>
    <property type="evidence" value="ECO:0000318"/>
    <property type="project" value="GO_Central"/>
</dbReference>
<dbReference type="GO" id="GO:0070369">
    <property type="term" value="C:beta-catenin-TCF7L2 complex"/>
    <property type="evidence" value="ECO:0000314"/>
    <property type="project" value="BHF-UCL"/>
</dbReference>
<dbReference type="GO" id="GO:0071664">
    <property type="term" value="C:catenin-TCF7L2 complex"/>
    <property type="evidence" value="ECO:0000318"/>
    <property type="project" value="GO_Central"/>
</dbReference>
<dbReference type="GO" id="GO:0000785">
    <property type="term" value="C:chromatin"/>
    <property type="evidence" value="ECO:0000314"/>
    <property type="project" value="BHF-UCL"/>
</dbReference>
<dbReference type="GO" id="GO:0005654">
    <property type="term" value="C:nucleoplasm"/>
    <property type="evidence" value="ECO:0000314"/>
    <property type="project" value="BHF-UCL"/>
</dbReference>
<dbReference type="GO" id="GO:0005634">
    <property type="term" value="C:nucleus"/>
    <property type="evidence" value="ECO:0000314"/>
    <property type="project" value="UniProtKB"/>
</dbReference>
<dbReference type="GO" id="GO:0016605">
    <property type="term" value="C:PML body"/>
    <property type="evidence" value="ECO:0007669"/>
    <property type="project" value="UniProtKB-SubCell"/>
</dbReference>
<dbReference type="GO" id="GO:0032993">
    <property type="term" value="C:protein-DNA complex"/>
    <property type="evidence" value="ECO:0000314"/>
    <property type="project" value="BHF-UCL"/>
</dbReference>
<dbReference type="GO" id="GO:0070016">
    <property type="term" value="F:armadillo repeat domain binding"/>
    <property type="evidence" value="ECO:0000353"/>
    <property type="project" value="BHF-UCL"/>
</dbReference>
<dbReference type="GO" id="GO:0008013">
    <property type="term" value="F:beta-catenin binding"/>
    <property type="evidence" value="ECO:0000314"/>
    <property type="project" value="BHF-UCL"/>
</dbReference>
<dbReference type="GO" id="GO:0003700">
    <property type="term" value="F:DNA-binding transcription factor activity"/>
    <property type="evidence" value="ECO:0000314"/>
    <property type="project" value="BHF-UCL"/>
</dbReference>
<dbReference type="GO" id="GO:0000981">
    <property type="term" value="F:DNA-binding transcription factor activity, RNA polymerase II-specific"/>
    <property type="evidence" value="ECO:0000314"/>
    <property type="project" value="BHF-UCL"/>
</dbReference>
<dbReference type="GO" id="GO:0001227">
    <property type="term" value="F:DNA-binding transcription repressor activity, RNA polymerase II-specific"/>
    <property type="evidence" value="ECO:0000314"/>
    <property type="project" value="BHF-UCL"/>
</dbReference>
<dbReference type="GO" id="GO:0045295">
    <property type="term" value="F:gamma-catenin binding"/>
    <property type="evidence" value="ECO:0000353"/>
    <property type="project" value="BHF-UCL"/>
</dbReference>
<dbReference type="GO" id="GO:0016922">
    <property type="term" value="F:nuclear receptor binding"/>
    <property type="evidence" value="ECO:0000353"/>
    <property type="project" value="BHF-UCL"/>
</dbReference>
<dbReference type="GO" id="GO:1990841">
    <property type="term" value="F:promoter-specific chromatin binding"/>
    <property type="evidence" value="ECO:0007669"/>
    <property type="project" value="Ensembl"/>
</dbReference>
<dbReference type="GO" id="GO:0019901">
    <property type="term" value="F:protein kinase binding"/>
    <property type="evidence" value="ECO:0000353"/>
    <property type="project" value="UniProtKB"/>
</dbReference>
<dbReference type="GO" id="GO:0000978">
    <property type="term" value="F:RNA polymerase II cis-regulatory region sequence-specific DNA binding"/>
    <property type="evidence" value="ECO:0000314"/>
    <property type="project" value="BHF-UCL"/>
</dbReference>
<dbReference type="GO" id="GO:0061629">
    <property type="term" value="F:RNA polymerase II-specific DNA-binding transcription factor binding"/>
    <property type="evidence" value="ECO:0000353"/>
    <property type="project" value="BHF-UCL"/>
</dbReference>
<dbReference type="GO" id="GO:0043565">
    <property type="term" value="F:sequence-specific DNA binding"/>
    <property type="evidence" value="ECO:0000314"/>
    <property type="project" value="BHF-UCL"/>
</dbReference>
<dbReference type="GO" id="GO:0000976">
    <property type="term" value="F:transcription cis-regulatory region binding"/>
    <property type="evidence" value="ECO:0000314"/>
    <property type="project" value="UniProtKB"/>
</dbReference>
<dbReference type="GO" id="GO:0001222">
    <property type="term" value="F:transcription corepressor binding"/>
    <property type="evidence" value="ECO:0000353"/>
    <property type="project" value="BHF-UCL"/>
</dbReference>
<dbReference type="GO" id="GO:0001568">
    <property type="term" value="P:blood vessel development"/>
    <property type="evidence" value="ECO:0000315"/>
    <property type="project" value="BHF-UCL"/>
</dbReference>
<dbReference type="GO" id="GO:0060070">
    <property type="term" value="P:canonical Wnt signaling pathway"/>
    <property type="evidence" value="ECO:0000314"/>
    <property type="project" value="BHF-UCL"/>
</dbReference>
<dbReference type="GO" id="GO:0045444">
    <property type="term" value="P:fat cell differentiation"/>
    <property type="evidence" value="ECO:0000314"/>
    <property type="project" value="BHF-UCL"/>
</dbReference>
<dbReference type="GO" id="GO:0042593">
    <property type="term" value="P:glucose homeostasis"/>
    <property type="evidence" value="ECO:0000314"/>
    <property type="project" value="BHF-UCL"/>
</dbReference>
<dbReference type="GO" id="GO:0043570">
    <property type="term" value="P:maintenance of DNA repeat elements"/>
    <property type="evidence" value="ECO:0000315"/>
    <property type="project" value="BHF-UCL"/>
</dbReference>
<dbReference type="GO" id="GO:0048625">
    <property type="term" value="P:myoblast fate commitment"/>
    <property type="evidence" value="ECO:0000314"/>
    <property type="project" value="BHF-UCL"/>
</dbReference>
<dbReference type="GO" id="GO:0060766">
    <property type="term" value="P:negative regulation of androgen receptor signaling pathway"/>
    <property type="evidence" value="ECO:0000314"/>
    <property type="project" value="BHF-UCL"/>
</dbReference>
<dbReference type="GO" id="GO:0090090">
    <property type="term" value="P:negative regulation of canonical Wnt signaling pathway"/>
    <property type="evidence" value="ECO:0000315"/>
    <property type="project" value="UniProtKB"/>
</dbReference>
<dbReference type="GO" id="GO:0045892">
    <property type="term" value="P:negative regulation of DNA-templated transcription"/>
    <property type="evidence" value="ECO:0000314"/>
    <property type="project" value="BHF-UCL"/>
</dbReference>
<dbReference type="GO" id="GO:2001237">
    <property type="term" value="P:negative regulation of extrinsic apoptotic signaling pathway"/>
    <property type="evidence" value="ECO:0000250"/>
    <property type="project" value="BHF-UCL"/>
</dbReference>
<dbReference type="GO" id="GO:0045721">
    <property type="term" value="P:negative regulation of gluconeogenesis"/>
    <property type="evidence" value="ECO:0007669"/>
    <property type="project" value="Ensembl"/>
</dbReference>
<dbReference type="GO" id="GO:0000122">
    <property type="term" value="P:negative regulation of transcription by RNA polymerase II"/>
    <property type="evidence" value="ECO:0000314"/>
    <property type="project" value="BHF-UCL"/>
</dbReference>
<dbReference type="GO" id="GO:2000675">
    <property type="term" value="P:negative regulation of type B pancreatic cell apoptotic process"/>
    <property type="evidence" value="ECO:0000250"/>
    <property type="project" value="BHF-UCL"/>
</dbReference>
<dbReference type="GO" id="GO:0031016">
    <property type="term" value="P:pancreas development"/>
    <property type="evidence" value="ECO:0000304"/>
    <property type="project" value="BHF-UCL"/>
</dbReference>
<dbReference type="GO" id="GO:0050679">
    <property type="term" value="P:positive regulation of epithelial cell proliferation"/>
    <property type="evidence" value="ECO:0000315"/>
    <property type="project" value="BHF-UCL"/>
</dbReference>
<dbReference type="GO" id="GO:0010718">
    <property type="term" value="P:positive regulation of epithelial to mesenchymal transition"/>
    <property type="evidence" value="ECO:0000315"/>
    <property type="project" value="BHF-UCL"/>
</dbReference>
<dbReference type="GO" id="GO:0010909">
    <property type="term" value="P:positive regulation of heparan sulfate proteoglycan biosynthetic process"/>
    <property type="evidence" value="ECO:0000315"/>
    <property type="project" value="BHF-UCL"/>
</dbReference>
<dbReference type="GO" id="GO:0032024">
    <property type="term" value="P:positive regulation of insulin secretion"/>
    <property type="evidence" value="ECO:0000315"/>
    <property type="project" value="BHF-UCL"/>
</dbReference>
<dbReference type="GO" id="GO:0051897">
    <property type="term" value="P:positive regulation of phosphatidylinositol 3-kinase/protein kinase B signal transduction"/>
    <property type="evidence" value="ECO:0000315"/>
    <property type="project" value="BHF-UCL"/>
</dbReference>
<dbReference type="GO" id="GO:1900182">
    <property type="term" value="P:positive regulation of protein localization to nucleus"/>
    <property type="evidence" value="ECO:0000315"/>
    <property type="project" value="BHF-UCL"/>
</dbReference>
<dbReference type="GO" id="GO:0045944">
    <property type="term" value="P:positive regulation of transcription by RNA polymerase II"/>
    <property type="evidence" value="ECO:0000314"/>
    <property type="project" value="BHF-UCL"/>
</dbReference>
<dbReference type="GO" id="GO:0032350">
    <property type="term" value="P:regulation of hormone metabolic process"/>
    <property type="evidence" value="ECO:0000314"/>
    <property type="project" value="BHF-UCL"/>
</dbReference>
<dbReference type="GO" id="GO:0048660">
    <property type="term" value="P:regulation of smooth muscle cell proliferation"/>
    <property type="evidence" value="ECO:0000315"/>
    <property type="project" value="BHF-UCL"/>
</dbReference>
<dbReference type="GO" id="GO:0006357">
    <property type="term" value="P:regulation of transcription by RNA polymerase II"/>
    <property type="evidence" value="ECO:0000314"/>
    <property type="project" value="BHF-UCL"/>
</dbReference>
<dbReference type="GO" id="GO:0009749">
    <property type="term" value="P:response to glucose"/>
    <property type="evidence" value="ECO:0000250"/>
    <property type="project" value="BHF-UCL"/>
</dbReference>
<dbReference type="CDD" id="cd21996">
    <property type="entry name" value="HMG-box_TCF7-like"/>
    <property type="match status" value="1"/>
</dbReference>
<dbReference type="DisProt" id="DP00175"/>
<dbReference type="FunFam" id="1.10.30.10:FF:000001">
    <property type="entry name" value="transcription factor 7 isoform X2"/>
    <property type="match status" value="1"/>
</dbReference>
<dbReference type="FunFam" id="4.10.900.10:FF:000002">
    <property type="entry name" value="transcription factor 7-like 2 isoform X1"/>
    <property type="match status" value="1"/>
</dbReference>
<dbReference type="Gene3D" id="1.10.30.10">
    <property type="entry name" value="High mobility group box domain"/>
    <property type="match status" value="1"/>
</dbReference>
<dbReference type="Gene3D" id="4.10.900.10">
    <property type="entry name" value="TCF3-CBD (Catenin binding domain)"/>
    <property type="match status" value="1"/>
</dbReference>
<dbReference type="IDEAL" id="IID00100"/>
<dbReference type="InterPro" id="IPR027397">
    <property type="entry name" value="Catenin-bd_sf"/>
</dbReference>
<dbReference type="InterPro" id="IPR013558">
    <property type="entry name" value="CTNNB1-bd_N"/>
</dbReference>
<dbReference type="InterPro" id="IPR009071">
    <property type="entry name" value="HMG_box_dom"/>
</dbReference>
<dbReference type="InterPro" id="IPR036910">
    <property type="entry name" value="HMG_box_dom_sf"/>
</dbReference>
<dbReference type="InterPro" id="IPR024940">
    <property type="entry name" value="TCF/LEF"/>
</dbReference>
<dbReference type="PANTHER" id="PTHR10373">
    <property type="entry name" value="TRANSCRIPTION FACTOR 7 FAMILY MEMBER"/>
    <property type="match status" value="1"/>
</dbReference>
<dbReference type="PANTHER" id="PTHR10373:SF32">
    <property type="entry name" value="TRANSCRIPTION FACTOR 7-LIKE 2"/>
    <property type="match status" value="1"/>
</dbReference>
<dbReference type="Pfam" id="PF08347">
    <property type="entry name" value="CTNNB1_binding"/>
    <property type="match status" value="1"/>
</dbReference>
<dbReference type="Pfam" id="PF00505">
    <property type="entry name" value="HMG_box"/>
    <property type="match status" value="1"/>
</dbReference>
<dbReference type="SMART" id="SM01366">
    <property type="entry name" value="c-clamp"/>
    <property type="match status" value="1"/>
</dbReference>
<dbReference type="SMART" id="SM00398">
    <property type="entry name" value="HMG"/>
    <property type="match status" value="1"/>
</dbReference>
<dbReference type="SUPFAM" id="SSF47095">
    <property type="entry name" value="HMG-box"/>
    <property type="match status" value="1"/>
</dbReference>
<dbReference type="PROSITE" id="PS50118">
    <property type="entry name" value="HMG_BOX_2"/>
    <property type="match status" value="1"/>
</dbReference>
<sequence>MPQLNGGGGDDLGANDELISFKDEGEQEEKSSENSSAERDLADVKSSLVNESETNQNSSSDSEAERRPPPRSESFRDKSRESLEEAAKRQDGGLFKGPPYPGYPFIMIPDLTSPYLPNGSLSPTARTLHFQSGSTHYSAYKTIEHQIAVQYLQMKWPLLDVQAGSLQSRQALKDARSPSPAHIVSNKVPVVQHPHHVHPLTPLITYSNEHFTPGNPPPHLPADVDPKTGIPRPPHPPDISPYYPLSPGTVGQIPHPLGWLVPQQGQPVYPITTGGFRHPYPTALTVNASMSRFPPHMVPPHHTLHTTGIPHPAIVTPTVKQESSQSDVGSLHSSKHQDSKKEEEKKKPHIKKPLNAFMLYMKEMRAKVVAECTLKESAAINQILGRRWHALSREEQAKYYELARKERQLHMQLYPGWSARDNYGKKKKRKRDKQPGETNEHSECFLNPCLSLPPITDLSAPKKCRARFGLDQQNNWCGPCRRKKKCVRYIQGEGSCLSPPSSDGSLLDSPPPSPNLLGSPPRDAKSQTEQTQPLSLSLKPDPLAHLSMMPPPPALLLAEATHKASALCPNGALDLPPAALQPAAPSSSIAQPSTSSLHSHSSLAGTQPQPLSLVTKSLE</sequence>
<evidence type="ECO:0000250" key="1"/>
<evidence type="ECO:0000250" key="2">
    <source>
        <dbReference type="UniProtKB" id="Q924A0"/>
    </source>
</evidence>
<evidence type="ECO:0000255" key="3"/>
<evidence type="ECO:0000255" key="4">
    <source>
        <dbReference type="PROSITE-ProRule" id="PRU00267"/>
    </source>
</evidence>
<evidence type="ECO:0000256" key="5">
    <source>
        <dbReference type="SAM" id="MobiDB-lite"/>
    </source>
</evidence>
<evidence type="ECO:0000269" key="6">
    <source>
    </source>
</evidence>
<evidence type="ECO:0000269" key="7">
    <source>
    </source>
</evidence>
<evidence type="ECO:0000269" key="8">
    <source>
    </source>
</evidence>
<evidence type="ECO:0000269" key="9">
    <source>
    </source>
</evidence>
<evidence type="ECO:0000269" key="10">
    <source>
    </source>
</evidence>
<evidence type="ECO:0000269" key="11">
    <source>
    </source>
</evidence>
<evidence type="ECO:0000269" key="12">
    <source>
    </source>
</evidence>
<evidence type="ECO:0000269" key="13">
    <source>
    </source>
</evidence>
<evidence type="ECO:0000269" key="14">
    <source>
    </source>
</evidence>
<evidence type="ECO:0000269" key="15">
    <source>
    </source>
</evidence>
<evidence type="ECO:0000269" key="16">
    <source>
    </source>
</evidence>
<evidence type="ECO:0000269" key="17">
    <source>
    </source>
</evidence>
<evidence type="ECO:0000269" key="18">
    <source>
    </source>
</evidence>
<evidence type="ECO:0000269" key="19">
    <source>
    </source>
</evidence>
<evidence type="ECO:0000269" key="20">
    <source>
    </source>
</evidence>
<evidence type="ECO:0000269" key="21">
    <source>
    </source>
</evidence>
<evidence type="ECO:0000269" key="22">
    <source>
    </source>
</evidence>
<evidence type="ECO:0000269" key="23">
    <source>
    </source>
</evidence>
<evidence type="ECO:0000269" key="24">
    <source>
    </source>
</evidence>
<evidence type="ECO:0000269" key="25">
    <source>
    </source>
</evidence>
<evidence type="ECO:0000269" key="26">
    <source>
    </source>
</evidence>
<evidence type="ECO:0000269" key="27">
    <source>
    </source>
</evidence>
<evidence type="ECO:0000269" key="28">
    <source>
    </source>
</evidence>
<evidence type="ECO:0000269" key="29">
    <source>
    </source>
</evidence>
<evidence type="ECO:0000269" key="30">
    <source>
    </source>
</evidence>
<evidence type="ECO:0000269" key="31">
    <source>
    </source>
</evidence>
<evidence type="ECO:0000269" key="32">
    <source>
    </source>
</evidence>
<evidence type="ECO:0000269" key="33">
    <source>
    </source>
</evidence>
<evidence type="ECO:0000269" key="34">
    <source>
    </source>
</evidence>
<evidence type="ECO:0000269" key="35">
    <source>
    </source>
</evidence>
<evidence type="ECO:0000269" key="36">
    <source>
    </source>
</evidence>
<evidence type="ECO:0000303" key="37">
    <source>
    </source>
</evidence>
<evidence type="ECO:0000303" key="38">
    <source>
    </source>
</evidence>
<evidence type="ECO:0000303" key="39">
    <source>
    </source>
</evidence>
<evidence type="ECO:0000303" key="40">
    <source>
    </source>
</evidence>
<evidence type="ECO:0000303" key="41">
    <source>
    </source>
</evidence>
<evidence type="ECO:0000303" key="42">
    <source ref="5"/>
</evidence>
<evidence type="ECO:0000305" key="43"/>
<evidence type="ECO:0000305" key="44">
    <source>
    </source>
</evidence>
<evidence type="ECO:0007744" key="45">
    <source>
    </source>
</evidence>
<evidence type="ECO:0007829" key="46">
    <source>
        <dbReference type="PDB" id="1JDH"/>
    </source>
</evidence>
<keyword id="KW-0002">3D-structure</keyword>
<keyword id="KW-0010">Activator</keyword>
<keyword id="KW-0025">Alternative splicing</keyword>
<keyword id="KW-0219">Diabetes mellitus</keyword>
<keyword id="KW-0238">DNA-binding</keyword>
<keyword id="KW-1017">Isopeptide bond</keyword>
<keyword id="KW-0539">Nucleus</keyword>
<keyword id="KW-0597">Phosphoprotein</keyword>
<keyword id="KW-1267">Proteomics identification</keyword>
<keyword id="KW-1185">Reference proteome</keyword>
<keyword id="KW-0678">Repressor</keyword>
<keyword id="KW-0804">Transcription</keyword>
<keyword id="KW-0805">Transcription regulation</keyword>
<keyword id="KW-0832">Ubl conjugation</keyword>
<keyword id="KW-0879">Wnt signaling pathway</keyword>
<feature type="chain" id="PRO_0000048623" description="Transcription factor 7-like 2">
    <location>
        <begin position="1"/>
        <end position="619"/>
    </location>
</feature>
<feature type="DNA-binding region" description="HMG box" evidence="4">
    <location>
        <begin position="350"/>
        <end position="418"/>
    </location>
</feature>
<feature type="region of interest" description="Disordered" evidence="5">
    <location>
        <begin position="1"/>
        <end position="96"/>
    </location>
</feature>
<feature type="region of interest" description="CTNNB1-binding" evidence="1">
    <location>
        <begin position="1"/>
        <end position="53"/>
    </location>
</feature>
<feature type="region of interest" description="Mediates interaction with MAD2L2" evidence="22">
    <location>
        <begin position="201"/>
        <end position="395"/>
    </location>
</feature>
<feature type="region of interest" description="Disordered" evidence="5">
    <location>
        <begin position="318"/>
        <end position="350"/>
    </location>
</feature>
<feature type="region of interest" description="Disordered" evidence="5">
    <location>
        <begin position="420"/>
        <end position="441"/>
    </location>
</feature>
<feature type="region of interest" description="Promoter-specific activation domain">
    <location>
        <begin position="459"/>
        <end position="505"/>
    </location>
</feature>
<feature type="region of interest" description="Disordered" evidence="5">
    <location>
        <begin position="496"/>
        <end position="547"/>
    </location>
</feature>
<feature type="region of interest" description="Disordered" evidence="5">
    <location>
        <begin position="574"/>
        <end position="619"/>
    </location>
</feature>
<feature type="short sequence motif" description="Nuclear localization signal" evidence="3">
    <location>
        <begin position="425"/>
        <end position="430"/>
    </location>
</feature>
<feature type="compositionally biased region" description="Gly residues" evidence="5">
    <location>
        <begin position="1"/>
        <end position="11"/>
    </location>
</feature>
<feature type="compositionally biased region" description="Basic and acidic residues" evidence="5">
    <location>
        <begin position="19"/>
        <end position="43"/>
    </location>
</feature>
<feature type="compositionally biased region" description="Polar residues" evidence="5">
    <location>
        <begin position="47"/>
        <end position="57"/>
    </location>
</feature>
<feature type="compositionally biased region" description="Basic and acidic residues" evidence="5">
    <location>
        <begin position="63"/>
        <end position="91"/>
    </location>
</feature>
<feature type="compositionally biased region" description="Polar residues" evidence="5">
    <location>
        <begin position="318"/>
        <end position="328"/>
    </location>
</feature>
<feature type="compositionally biased region" description="Basic and acidic residues" evidence="5">
    <location>
        <begin position="335"/>
        <end position="346"/>
    </location>
</feature>
<feature type="compositionally biased region" description="Low complexity" evidence="5">
    <location>
        <begin position="496"/>
        <end position="508"/>
    </location>
</feature>
<feature type="compositionally biased region" description="Low complexity" evidence="5">
    <location>
        <begin position="574"/>
        <end position="603"/>
    </location>
</feature>
<feature type="compositionally biased region" description="Polar residues" evidence="5">
    <location>
        <begin position="604"/>
        <end position="619"/>
    </location>
</feature>
<feature type="modified residue" description="Phosphothreonine; by NLK" evidence="44">
    <location>
        <position position="201"/>
    </location>
</feature>
<feature type="modified residue" description="Phosphothreonine; by NLK" evidence="44">
    <location>
        <position position="212"/>
    </location>
</feature>
<feature type="cross-link" description="Glycyl lysine isopeptide (Lys-Gly) (interchain with G-Cter in SUMO2)" evidence="45">
    <location>
        <position position="22"/>
    </location>
</feature>
<feature type="cross-link" description="Glycyl lysine isopeptide (Lys-Gly) (interchain with G-Cter in SUMO)" evidence="14">
    <location>
        <position position="320"/>
    </location>
</feature>
<feature type="cross-link" description="Glycyl lysine isopeptide (Lys-Gly) (interchain with G-Cter in SUMO2)" evidence="45">
    <location>
        <position position="539"/>
    </location>
</feature>
<feature type="splice variant" id="VSP_053748" description="In isoform 17." evidence="40">
    <original>MPQLNG</original>
    <variation>MSSFLS</variation>
    <location>
        <begin position="1"/>
        <end position="6"/>
    </location>
</feature>
<feature type="splice variant" id="VSP_053749" description="In isoform 17." evidence="40">
    <location>
        <begin position="7"/>
        <end position="290"/>
    </location>
</feature>
<feature type="splice variant" id="VSP_006962" description="In isoform 8, isoform 10, isoform 11, isoform 12, isoform 13, isoform 14, isoform 15 and isoform 16." evidence="37 38 39 40 41">
    <location>
        <begin position="128"/>
        <end position="150"/>
    </location>
</feature>
<feature type="splice variant" id="VSP_045821" description="In isoform 11." evidence="43">
    <original>V</original>
    <variation>VSPLPCCTQGHDCQHFYPPSDFTVSTQVFRDMKRSHSLQKVGEPWCIE</variation>
    <location>
        <position position="184"/>
    </location>
</feature>
<feature type="splice variant" id="VSP_006963" description="In isoform 10." evidence="38">
    <location>
        <begin position="260"/>
        <end position="263"/>
    </location>
</feature>
<feature type="splice variant" id="VSP_053750" description="In isoform 15 and isoform 16." evidence="40">
    <original>M</original>
    <variation>MSSFLS</variation>
    <location>
        <position position="290"/>
    </location>
</feature>
<feature type="splice variant" id="VSP_006965" description="In isoform 9, isoform 11, isoform 14 and isoform 15." evidence="37 39 40 41 42">
    <original>EHSECFLNPCLSLPPITDLSAPKKCR</original>
    <variation>GEKKSAFATYKVKAAASAHPLQMEAY</variation>
    <location>
        <begin position="440"/>
        <end position="465"/>
    </location>
</feature>
<feature type="splice variant" id="VSP_006964" description="In isoform 4, isoform 5, isoform 7, isoform 13 and isoform 16." evidence="39 40">
    <location>
        <begin position="440"/>
        <end position="456"/>
    </location>
</feature>
<feature type="splice variant" id="VSP_006967" description="In isoform 6." evidence="40">
    <original>DLSAPKKCRARFGLDQQNNWCGPCRRKKKCVRYIQGEGSCLSPPSSDGSLLDSPPPSPNLLGSPPRDAKSQTEQTQPLSLSLKPDPLAHLSMMPPPPALLLAEATHKASALCPNGALDLPPAALQPAAPSSSIAQPSTSSLHSHSSLAGTQPQPLSLVTKSLE</original>
    <variation>GEKKSAFATYKVKAAASAHPLQMEAY</variation>
    <location>
        <begin position="457"/>
        <end position="619"/>
    </location>
</feature>
<feature type="splice variant" id="VSP_006968" description="In isoform 10." evidence="38">
    <original>DLSAPKKCRARFGLDQQNNWCGPCRR</original>
    <variation>GEKKSAFATYKVKAAASAHPLQMEAY</variation>
    <location>
        <begin position="457"/>
        <end position="482"/>
    </location>
</feature>
<feature type="splice variant" id="VSP_006966" description="In isoform 3, isoform 7 and isoform 13." evidence="39 40">
    <original>DLSAPKKCRARFGLDQQNNWCG</original>
    <variation>DANTPKKCRALFGLDRQTLWCK</variation>
    <location>
        <begin position="457"/>
        <end position="478"/>
    </location>
</feature>
<feature type="splice variant" id="VSP_006969" description="In isoform 9, isoform 11, isoform 14 and isoform 15." evidence="37 39 40 41 42">
    <location>
        <begin position="466"/>
        <end position="619"/>
    </location>
</feature>
<feature type="splice variant" id="VSP_045822" description="In isoform 12." evidence="39">
    <original>RRKKKCVRYIQGEGSCLSPPSSDGSLLDSPPPSPNLLGSPPRDAKSQTEQTQPLSLSLKPDPLAHLSMMPPPPALLLAEATHKASALCPNGALDLPPAALQPAAPSSSIAQPSTSSLHSHSSLAGTQPQPLSLVTKSLE</original>
    <variation>SL</variation>
    <location>
        <begin position="481"/>
        <end position="619"/>
    </location>
</feature>
<feature type="splice variant" id="VSP_006970" description="In isoform 2 and isoform 4." evidence="43">
    <original>RKKKCVRYIQGEG</original>
    <variation>CKYSKEVSGTVRA</variation>
    <location>
        <begin position="482"/>
        <end position="494"/>
    </location>
</feature>
<feature type="splice variant" id="VSP_006971" description="In isoform 10." evidence="38">
    <location>
        <begin position="483"/>
        <end position="619"/>
    </location>
</feature>
<feature type="splice variant" id="VSP_006972" description="In isoform 2 and isoform 4." evidence="43">
    <location>
        <begin position="495"/>
        <end position="619"/>
    </location>
</feature>
<feature type="sequence variant" id="VAR_047126" description="In dbSNP:rs2757884." evidence="7">
    <original>K</original>
    <variation>N</variation>
    <location>
        <position position="346"/>
    </location>
</feature>
<feature type="sequence variant" id="VAR_035939" description="In a colorectal cancer sample; somatic mutation." evidence="18">
    <original>R</original>
    <variation>C</variation>
    <location>
        <position position="465"/>
    </location>
</feature>
<feature type="mutagenesis site" description="Reduces CTNNB1 binding." evidence="6">
    <original>DD</original>
    <variation>AA</variation>
    <location>
        <begin position="10"/>
        <end position="11"/>
    </location>
</feature>
<feature type="mutagenesis site" description="Abolishes CTNNB1 binding." evidence="6">
    <original>D</original>
    <variation>A</variation>
    <location>
        <position position="16"/>
    </location>
</feature>
<feature type="mutagenesis site" description="Reduces CTNNB1 binding." evidence="6">
    <original>E</original>
    <variation>A</variation>
    <location>
        <position position="17"/>
    </location>
</feature>
<feature type="mutagenesis site" description="Reduces transcription activation." evidence="10">
    <original>I</original>
    <variation>A</variation>
    <location>
        <position position="19"/>
    </location>
</feature>
<feature type="mutagenesis site" description="Reduces transcription activation." evidence="10">
    <original>F</original>
    <variation>A</variation>
    <location>
        <position position="21"/>
    </location>
</feature>
<feature type="mutagenesis site" description="Reduces CTNNB1 binding." evidence="6">
    <original>DE</original>
    <variation>AA</variation>
    <location>
        <begin position="23"/>
        <end position="24"/>
    </location>
</feature>
<feature type="mutagenesis site" description="Reduces CTNNB1 binding, and abolishes CTNNB1 binding; when associated with A-26; A-28 and A-29." evidence="9">
    <original>E</original>
    <variation>A</variation>
    <location>
        <position position="24"/>
    </location>
</feature>
<feature type="mutagenesis site" description="Abolishes CTNNB1 binding; when associated with A-24; A-28 and A-29." evidence="9">
    <original>E</original>
    <variation>A</variation>
    <location>
        <position position="26"/>
    </location>
</feature>
<feature type="mutagenesis site" description="Abolishes CTNNB1 binding; when associated with A-24; A-26 and A-29." evidence="9">
    <original>E</original>
    <variation>A</variation>
    <location>
        <position position="28"/>
    </location>
</feature>
<feature type="mutagenesis site" description="Reduces CTNNB1 binding, and abolishes CTNNB1 binding; when associated with A-24; A-26 and A-28." evidence="9">
    <original>E</original>
    <variation>A</variation>
    <location>
        <position position="29"/>
    </location>
</feature>
<feature type="mutagenesis site" description="Abolishes CTNNB1 binding." evidence="6">
    <original>L</original>
    <variation>A</variation>
    <location>
        <position position="48"/>
    </location>
</feature>
<feature type="mutagenesis site" description="Reduced phosphorylation by NLK and enhanced DNA-binding; when associated with V-212." evidence="13">
    <original>T</original>
    <variation>V</variation>
    <location>
        <position position="201"/>
    </location>
</feature>
<feature type="mutagenesis site" description="Reduced phosphorylation by NLK and enhanced DNA-binding; when associated with V-201." evidence="13">
    <original>T</original>
    <variation>V</variation>
    <location>
        <position position="212"/>
    </location>
</feature>
<feature type="mutagenesis site" description="Loss of sumoylation. No effect on localization to nuclear bodies." evidence="14">
    <original>K</original>
    <variation>R</variation>
    <location>
        <position position="320"/>
    </location>
</feature>
<feature type="mutagenesis site" description="Loss of sumoylation." evidence="14">
    <original>E</original>
    <variation>A</variation>
    <location>
        <position position="322"/>
    </location>
</feature>
<feature type="sequence conflict" description="In Ref. 2; CAB97212/CAB97213." evidence="43" ref="2">
    <original>NGSL</original>
    <variation>KRSV</variation>
    <location>
        <begin position="118"/>
        <end position="121"/>
    </location>
</feature>
<feature type="sequence conflict" description="In Ref. 4; ADK35180." evidence="43" ref="4">
    <original>Q</original>
    <variation>R</variation>
    <location>
        <position position="167"/>
    </location>
</feature>
<feature type="sequence conflict" description="In Ref. 4; ADK35180." evidence="43" ref="4">
    <original>P</original>
    <variation>L</variation>
    <location>
        <position position="226"/>
    </location>
</feature>
<feature type="sequence conflict" description="In Ref. 1; CAA72166." evidence="43" ref="1">
    <original>M</original>
    <variation>V</variation>
    <location>
        <position position="290"/>
    </location>
</feature>
<feature type="sequence conflict" description="In Ref. 3; ACI28527." evidence="43" ref="3">
    <original>L</original>
    <variation>H</variation>
    <location>
        <position position="331"/>
    </location>
</feature>
<feature type="sequence conflict" description="In Ref. 1; CAA72166." evidence="43" ref="1">
    <original>S</original>
    <variation>W</variation>
    <location>
        <position position="596"/>
    </location>
</feature>
<feature type="helix" evidence="46">
    <location>
        <begin position="22"/>
        <end position="31"/>
    </location>
</feature>
<feature type="helix" evidence="46">
    <location>
        <begin position="38"/>
        <end position="48"/>
    </location>
</feature>
<protein>
    <recommendedName>
        <fullName>Transcription factor 7-like 2</fullName>
    </recommendedName>
    <alternativeName>
        <fullName>HMG box transcription factor 4</fullName>
    </alternativeName>
    <alternativeName>
        <fullName>T-cell-specific transcription factor 4</fullName>
        <shortName>T-cell factor 4</shortName>
        <shortName>TCF-4</shortName>
        <shortName>hTCF-4</shortName>
    </alternativeName>
</protein>
<comment type="function">
    <text evidence="11 14 22 28 35">Participates in the Wnt signaling pathway and modulates MYC expression by binding to its promoter in a sequence-specific manner. Acts as a repressor in the absence of CTNNB1, and as activator in its presence. Activates transcription from promoters with several copies of the Tcf motif 5'-CCTTTGATC-3' in the presence of CTNNB1. TLE1, TLE2, TLE3 and TLE4 repress transactivation mediated by TCF7L2/TCF4 and CTNNB1. Expression of dominant-negative mutants results in cell-cycle arrest in G1. Necessary for the maintenance of the epithelial stem-cell compartment of the small intestine.</text>
</comment>
<comment type="subunit">
    <text evidence="2 6 8 12 13 14 16 17 19 20 21 22 23 24 25 26 27 28 30 31 32 33 34 36">Interacts with TGFB1I1 (By similarity). Interacts with CTNNB1 (via the armadillo repeat); forms stable transcription complex (PubMed:10080941, PubMed:17052462, PubMed:19816403, PubMed:28829046, PubMed:29739711, PubMed:9065401, PubMed:9916915). Interacts with EP300. Interacts with NLK. Interacts with CCDC85B (probably through the HMG box); prevents interaction with CTNNB1. Interacts with TNIK. Interacts with MAD2L2; prevents TCF7L2/TCF4 binding to promZIPK/DAPK3oters, negatively modulating its transcriptional activity. Interacts with ZIPK/DAPK3. Interacts with XIAP/BIRC4 and TLE3. Interacts with DDIT3/CHOP. The CTNNB1 and TCF7L2/TCF4 complex interacts with PML (isoform PML-4). Identified in a complex with CTNNB1 and FERMT2. Interacts with SPIN1 (PubMed:22258766, PubMed:24589551, PubMed:29061846). Interacts with C11orf84/SPINDOC in a SPIN1-dependent manner (PubMed:29061846). Interacts with DAZAP2; the interaction results in localization of DAZAP2 to the nucleus (PubMed:19304756).</text>
</comment>
<comment type="interaction">
    <interactant intactId="EBI-924724">
        <id>Q9NQB0</id>
    </interactant>
    <interactant intactId="EBI-491549">
        <id>P35222</id>
        <label>CTNNB1</label>
    </interactant>
    <organismsDiffer>false</organismsDiffer>
    <experiments>27</experiments>
</comment>
<comment type="interaction">
    <interactant intactId="EBI-924724">
        <id>Q9NQB0</id>
    </interactant>
    <interactant intactId="EBI-77321">
        <id>Q9UER7</id>
        <label>DAXX</label>
    </interactant>
    <organismsDiffer>false</organismsDiffer>
    <experiments>5</experiments>
</comment>
<comment type="interaction">
    <interactant intactId="EBI-924724">
        <id>Q9NQB0</id>
    </interactant>
    <interactant intactId="EBI-2507362">
        <id>Q14526</id>
        <label>HIC1</label>
    </interactant>
    <organismsDiffer>false</organismsDiffer>
    <experiments>6</experiments>
</comment>
<comment type="interaction">
    <interactant intactId="EBI-924724">
        <id>Q9NQB0</id>
    </interactant>
    <interactant intactId="EBI-925990">
        <id>Q13761</id>
        <label>RUNX3</label>
    </interactant>
    <organismsDiffer>false</organismsDiffer>
    <experiments>14</experiments>
</comment>
<comment type="interaction">
    <interactant intactId="EBI-924724">
        <id>Q9NQB0</id>
    </interactant>
    <interactant intactId="EBI-1051794">
        <id>Q9UKE5</id>
        <label>TNIK</label>
    </interactant>
    <organismsDiffer>false</organismsDiffer>
    <experiments>3</experiments>
</comment>
<comment type="interaction">
    <interactant intactId="EBI-924724">
        <id>Q9NQB0</id>
    </interactant>
    <interactant intactId="EBI-353208">
        <id>P12956</id>
        <label>XRCC6</label>
    </interactant>
    <organismsDiffer>false</organismsDiffer>
    <experiments>10</experiments>
</comment>
<comment type="interaction">
    <interactant intactId="EBI-11746252">
        <id>Q9NQB0-10</id>
    </interactant>
    <interactant intactId="EBI-11976299">
        <id>Q5BKX5-3</id>
        <label>ACTMAP</label>
    </interactant>
    <organismsDiffer>false</organismsDiffer>
    <experiments>3</experiments>
</comment>
<comment type="interaction">
    <interactant intactId="EBI-11746252">
        <id>Q9NQB0-10</id>
    </interactant>
    <interactant intactId="EBI-953896">
        <id>Q9NP55</id>
        <label>BPIFA1</label>
    </interactant>
    <organismsDiffer>false</organismsDiffer>
    <experiments>3</experiments>
</comment>
<comment type="interaction">
    <interactant intactId="EBI-11746252">
        <id>Q9NQB0-10</id>
    </interactant>
    <interactant intactId="EBI-12819063">
        <id>Q9BYD5</id>
        <label>CNFN</label>
    </interactant>
    <organismsDiffer>false</organismsDiffer>
    <experiments>3</experiments>
</comment>
<comment type="interaction">
    <interactant intactId="EBI-11746252">
        <id>Q9NQB0-10</id>
    </interactant>
    <interactant intactId="EBI-748171">
        <id>O43186</id>
        <label>CRX</label>
    </interactant>
    <organismsDiffer>false</organismsDiffer>
    <experiments>3</experiments>
</comment>
<comment type="interaction">
    <interactant intactId="EBI-11746252">
        <id>Q9NQB0-10</id>
    </interactant>
    <interactant intactId="EBI-3867333">
        <id>A8MQ03</id>
        <label>CYSRT1</label>
    </interactant>
    <organismsDiffer>false</organismsDiffer>
    <experiments>3</experiments>
</comment>
<comment type="interaction">
    <interactant intactId="EBI-11746252">
        <id>Q9NQB0-10</id>
    </interactant>
    <interactant intactId="EBI-12193763">
        <id>A1KXE4-2</id>
        <label>FAM168B</label>
    </interactant>
    <organismsDiffer>false</organismsDiffer>
    <experiments>3</experiments>
</comment>
<comment type="interaction">
    <interactant intactId="EBI-11746252">
        <id>Q9NQB0-10</id>
    </interactant>
    <interactant intactId="EBI-618309">
        <id>Q08379</id>
        <label>GOLGA2</label>
    </interactant>
    <organismsDiffer>false</organismsDiffer>
    <experiments>3</experiments>
</comment>
<comment type="interaction">
    <interactant intactId="EBI-11746252">
        <id>Q9NQB0-10</id>
    </interactant>
    <interactant intactId="EBI-748258">
        <id>Q5TA45</id>
        <label>INTS11</label>
    </interactant>
    <organismsDiffer>false</organismsDiffer>
    <experiments>3</experiments>
</comment>
<comment type="interaction">
    <interactant intactId="EBI-11746252">
        <id>Q9NQB0-10</id>
    </interactant>
    <interactant intactId="EBI-702484">
        <id>P14923</id>
        <label>JUP</label>
    </interactant>
    <organismsDiffer>false</organismsDiffer>
    <experiments>3</experiments>
</comment>
<comment type="interaction">
    <interactant intactId="EBI-11746252">
        <id>Q9NQB0-10</id>
    </interactant>
    <interactant intactId="EBI-1048945">
        <id>Q3LI72</id>
        <label>KRTAP19-5</label>
    </interactant>
    <organismsDiffer>false</organismsDiffer>
    <experiments>3</experiments>
</comment>
<comment type="interaction">
    <interactant intactId="EBI-11746252">
        <id>Q9NQB0-10</id>
    </interactant>
    <interactant intactId="EBI-10241353">
        <id>Q3SYF9</id>
        <label>KRTAP19-7</label>
    </interactant>
    <organismsDiffer>false</organismsDiffer>
    <experiments>3</experiments>
</comment>
<comment type="interaction">
    <interactant intactId="EBI-11746252">
        <id>Q9NQB0-10</id>
    </interactant>
    <interactant intactId="EBI-18395721">
        <id>Q3LI59</id>
        <label>KRTAP21-2</label>
    </interactant>
    <organismsDiffer>false</organismsDiffer>
    <experiments>3</experiments>
</comment>
<comment type="interaction">
    <interactant intactId="EBI-11746252">
        <id>Q9NQB0-10</id>
    </interactant>
    <interactant intactId="EBI-12111050">
        <id>Q3LI64</id>
        <label>KRTAP6-1</label>
    </interactant>
    <organismsDiffer>false</organismsDiffer>
    <experiments>3</experiments>
</comment>
<comment type="interaction">
    <interactant intactId="EBI-11746252">
        <id>Q9NQB0-10</id>
    </interactant>
    <interactant intactId="EBI-11962084">
        <id>Q3LI66</id>
        <label>KRTAP6-2</label>
    </interactant>
    <organismsDiffer>false</organismsDiffer>
    <experiments>5</experiments>
</comment>
<comment type="interaction">
    <interactant intactId="EBI-11746252">
        <id>Q9NQB0-10</id>
    </interactant>
    <interactant intactId="EBI-22311199">
        <id>Q3LI67</id>
        <label>KRTAP6-3</label>
    </interactant>
    <organismsDiffer>false</organismsDiffer>
    <experiments>3</experiments>
</comment>
<comment type="interaction">
    <interactant intactId="EBI-11746252">
        <id>Q9NQB0-10</id>
    </interactant>
    <interactant intactId="EBI-18394498">
        <id>Q8IUC3</id>
        <label>KRTAP7-1</label>
    </interactant>
    <organismsDiffer>false</organismsDiffer>
    <experiments>3</experiments>
</comment>
<comment type="interaction">
    <interactant intactId="EBI-11746252">
        <id>Q9NQB0-10</id>
    </interactant>
    <interactant intactId="EBI-6447480">
        <id>P35548</id>
        <label>MSX2</label>
    </interactant>
    <organismsDiffer>false</organismsDiffer>
    <experiments>3</experiments>
</comment>
<comment type="interaction">
    <interactant intactId="EBI-11746252">
        <id>Q9NQB0-10</id>
    </interactant>
    <interactant intactId="EBI-12832742">
        <id>Q9UF11-2</id>
        <label>PLEKHB1</label>
    </interactant>
    <organismsDiffer>false</organismsDiffer>
    <experiments>3</experiments>
</comment>
<comment type="interaction">
    <interactant intactId="EBI-11746252">
        <id>Q9NQB0-10</id>
    </interactant>
    <interactant intactId="EBI-1053424">
        <id>O43741</id>
        <label>PRKAB2</label>
    </interactant>
    <organismsDiffer>false</organismsDiffer>
    <experiments>3</experiments>
</comment>
<comment type="interaction">
    <interactant intactId="EBI-11746252">
        <id>Q9NQB0-10</id>
    </interactant>
    <interactant intactId="EBI-12754095">
        <id>P86480</id>
        <label>PRR20D</label>
    </interactant>
    <organismsDiffer>false</organismsDiffer>
    <experiments>3</experiments>
</comment>
<comment type="interaction">
    <interactant intactId="EBI-11746252">
        <id>Q9NQB0-10</id>
    </interactant>
    <interactant intactId="EBI-12275818">
        <id>Q53HV7-2</id>
        <label>SMUG1</label>
    </interactant>
    <organismsDiffer>false</organismsDiffer>
    <experiments>3</experiments>
</comment>
<comment type="interaction">
    <interactant intactId="EBI-11746252">
        <id>Q9NQB0-10</id>
    </interactant>
    <interactant intactId="EBI-11741437">
        <id>Q08117-2</id>
        <label>TLE5</label>
    </interactant>
    <organismsDiffer>false</organismsDiffer>
    <experiments>3</experiments>
</comment>
<comment type="interaction">
    <interactant intactId="EBI-11746252">
        <id>Q9NQB0-10</id>
    </interactant>
    <interactant intactId="EBI-359224">
        <id>Q13077</id>
        <label>TRAF1</label>
    </interactant>
    <organismsDiffer>false</organismsDiffer>
    <experiments>3</experiments>
</comment>
<comment type="interaction">
    <interactant intactId="EBI-11746252">
        <id>Q9NQB0-10</id>
    </interactant>
    <interactant intactId="EBI-12806590">
        <id>Q86WV8</id>
        <label>TSC1</label>
    </interactant>
    <organismsDiffer>false</organismsDiffer>
    <experiments>3</experiments>
</comment>
<comment type="interaction">
    <interactant intactId="EBI-11746252">
        <id>Q9NQB0-10</id>
    </interactant>
    <interactant intactId="EBI-12068150">
        <id>Q6NVU6</id>
        <label>UFSP1</label>
    </interactant>
    <organismsDiffer>false</organismsDiffer>
    <experiments>3</experiments>
</comment>
<comment type="subcellular location">
    <subcellularLocation>
        <location evidence="14 28 36">Nucleus</location>
        <location evidence="14 28 36">PML body</location>
    </subcellularLocation>
    <subcellularLocation>
        <location evidence="21">Nucleus</location>
    </subcellularLocation>
    <text>Diffuse pattern. Colocalizes with SUMO1 and PIAS4 in a subset of PML (promyelocytic leukemia) nuclear bodies.</text>
</comment>
<comment type="alternative products">
    <event type="alternative splicing"/>
    <isoform>
        <id>Q9NQB0-1</id>
        <name>1</name>
        <name>TCF-4M</name>
        <sequence type="displayed"/>
    </isoform>
    <isoform>
        <id>Q9NQB0-2</id>
        <name>2</name>
        <sequence type="described" ref="VSP_006970 VSP_006972"/>
    </isoform>
    <isoform>
        <id>Q9NQB0-3</id>
        <name>3</name>
        <sequence type="described" ref="VSP_006966"/>
    </isoform>
    <isoform>
        <id>Q9NQB0-4</id>
        <name>4</name>
        <sequence type="described" ref="VSP_006964 VSP_006970 VSP_006972"/>
    </isoform>
    <isoform>
        <id>Q9NQB0-5</id>
        <name>5</name>
        <sequence type="described" ref="VSP_006964"/>
    </isoform>
    <isoform>
        <id>Q9NQB0-6</id>
        <name>6</name>
        <name>TCF-4I</name>
        <sequence type="described" ref="VSP_006967"/>
    </isoform>
    <isoform>
        <id>Q9NQB0-7</id>
        <name>7</name>
        <sequence type="described" ref="VSP_006964 VSP_006966"/>
    </isoform>
    <isoform>
        <id>Q9NQB0-8</id>
        <name>8</name>
        <sequence type="described" ref="VSP_006962"/>
    </isoform>
    <isoform>
        <id>Q9NQB0-9</id>
        <name>9</name>
        <name>TCF-4G</name>
        <sequence type="described" ref="VSP_006965 VSP_006969"/>
    </isoform>
    <isoform>
        <id>Q9NQB0-10</id>
        <name>10</name>
        <sequence type="described" ref="VSP_006962 VSP_006963 VSP_006968 VSP_006971"/>
    </isoform>
    <isoform>
        <id>Q9NQB0-11</id>
        <name>11</name>
        <sequence type="described" ref="VSP_006962 VSP_045821 VSP_006965 VSP_006969"/>
    </isoform>
    <isoform>
        <id>Q9NQB0-12</id>
        <name>12</name>
        <sequence type="described" ref="VSP_006962 VSP_045822"/>
    </isoform>
    <isoform>
        <id>Q9NQB0-13</id>
        <name>13</name>
        <name>TCF-4J</name>
        <sequence type="described" ref="VSP_006962 VSP_006964 VSP_006966"/>
    </isoform>
    <isoform>
        <id>Q9NQB0-14</id>
        <name>14</name>
        <name>TCF-4B</name>
        <name>short</name>
        <sequence type="described" ref="VSP_006962 VSP_006965 VSP_006969"/>
    </isoform>
    <isoform>
        <id>Q9NQB0-15</id>
        <name>15</name>
        <name>TCF-4A</name>
        <sequence type="described" ref="VSP_006962 VSP_053750 VSP_006965 VSP_006969"/>
    </isoform>
    <isoform>
        <id>Q9NQB0-16</id>
        <name>16</name>
        <name>TCF-4K</name>
        <sequence type="described" ref="VSP_006962 VSP_053750 VSP_006964"/>
    </isoform>
    <isoform>
        <id>Q9NQB0-17</id>
        <name>17</name>
        <name>TCF-4X2</name>
        <sequence type="described" ref="VSP_053748 VSP_053749"/>
    </isoform>
</comment>
<comment type="tissue specificity">
    <text evidence="36">Detected in epithelium from small intestine, with the highest expression at the top of the crypts and a gradient of expression from crypt to villus. Detected in colon epithelium and colon cancer, and in epithelium from mammary gland and carcinomas derived therefrom.</text>
</comment>
<comment type="developmental stage">
    <text>Highly expressed in crypt regions and barely detectable in villi in epithelium from fetal small intestine at week 16. At week 22 expression in villi had increased strongly.</text>
</comment>
<comment type="domain">
    <text>The promoter-specific activation domain interacts with the transcriptional coactivator EP300.</text>
</comment>
<comment type="PTM">
    <text evidence="13">In vitro, phosphorylated by TNIK.</text>
</comment>
<comment type="PTM">
    <text evidence="13">Phosphorylated at Thr-201 and/or Thr-212 by NLK. Phosphorylation by NLK at these sites inhibits DNA-binding by TCF7L2/TCF4, thereby preventing transcriptional activation of target genes of the canonical Wnt/beta-catenin signaling pathway.</text>
</comment>
<comment type="PTM">
    <text evidence="14">Polysumoylated. Sumoylation is enhanced by PIAS family members and desumoylation is enhanced by SENP2. Sumoylation/desumoylation regulates TCF7L2/TCF4 transcription activity in the Wnt/beta-catenin signaling pathway without altering interaction with CTNNB1 nor binding to DNA.</text>
</comment>
<comment type="disease">
    <text>Constitutive activation and subsequent transactivation of target genes may lead to the maintenance of stem-cell characteristics (cycling and longevity) in cells that should normally undergo terminal differentiation and constitute the primary transforming event in colorectal cancer (CRC).</text>
</comment>
<comment type="disease" evidence="15 29">
    <disease id="DI-02060">
        <name>Type 2 diabetes mellitus</name>
        <acronym>T2D</acronym>
        <description>A multifactorial disorder of glucose homeostasis caused by a lack of sensitivity to insulin. Affected individuals usually have an obese body habitus and manifestations of a metabolic syndrome characterized by diabetes, insulin resistance, hypertension and hypertriglyceridemia. The disease results in long-term complications that affect the eyes, kidneys, nerves, and blood vessels.</description>
        <dbReference type="MIM" id="125853"/>
    </disease>
    <text>Disease susceptibility is associated with variants affecting the gene represented in this entry.</text>
</comment>
<comment type="miscellaneous">
    <molecule>Isoform 12</molecule>
    <text evidence="43">Low expression in pancreas and colon.</text>
</comment>
<comment type="miscellaneous">
    <molecule>Isoform 13</molecule>
    <text evidence="43">Common splicing form, lowest expression in skeletal muscle.</text>
</comment>
<comment type="miscellaneous">
    <molecule>Isoform 14</molecule>
    <text evidence="43">High transcriptional activity. Major isoform in liver.</text>
</comment>
<comment type="similarity">
    <text evidence="43">Belongs to the TCF/LEF family.</text>
</comment>
<reference key="1">
    <citation type="journal article" date="1997" name="Science">
        <title>Constitutive transcriptional activation by a beta-catenin-Tcf complex in APC-/- colon carcinoma.</title>
        <authorList>
            <person name="Korinek V."/>
            <person name="Barker N."/>
            <person name="Morin P.J."/>
            <person name="van Wichen D."/>
            <person name="de Weger R."/>
            <person name="Kinzler K.W."/>
            <person name="Vogelstein B."/>
            <person name="Clevers H."/>
        </authorList>
    </citation>
    <scope>NUCLEOTIDE SEQUENCE [MRNA] (ISOFORMS 8 AND 9)</scope>
    <scope>INTERACTION WITH CTNNB1</scope>
    <source>
        <tissue>Fetus</tissue>
    </source>
</reference>
<reference key="2">
    <citation type="journal article" date="2000" name="Cancer Res.">
        <title>The human T cell transcription factor-4 gene: structure, extensive characterization of alternative splicings, and mutational analysis in colorectal cancer cell lines.</title>
        <authorList>
            <person name="Duval A."/>
            <person name="Rolland S."/>
            <person name="Tubacher E."/>
            <person name="Bui H."/>
            <person name="Thomas G."/>
            <person name="Hamelin R."/>
        </authorList>
    </citation>
    <scope>NUCLEOTIDE SEQUENCE [GENOMIC DNA] (ISOFORMS 1; 2; 3; 4; 5; 6; 7 AND 9)</scope>
    <scope>VARIANT ASN-346</scope>
</reference>
<reference key="3">
    <citation type="journal article" date="2009" name="Hum. Mol. Genet.">
        <title>Tissue-specific alternative splicing of TCF7L2.</title>
        <authorList>
            <person name="Prokunina-Olsson L."/>
            <person name="Welch C."/>
            <person name="Hansson O."/>
            <person name="Adhikari N."/>
            <person name="Scott L.J."/>
            <person name="Usher N."/>
            <person name="Tong M."/>
            <person name="Sprau A."/>
            <person name="Swift A."/>
            <person name="Bonnycastle L.L."/>
            <person name="Erdos M.R."/>
            <person name="He Z."/>
            <person name="Saxena R."/>
            <person name="Harmon B."/>
            <person name="Kotova O."/>
            <person name="Hoffman E.P."/>
            <person name="Altshuler D."/>
            <person name="Groop L."/>
            <person name="Boehnke M."/>
            <person name="Collins F.S."/>
            <person name="Hall J.L."/>
        </authorList>
    </citation>
    <scope>NUCLEOTIDE SEQUENCE [MRNA] (ISOFORMS 12; 13 AND 14)</scope>
    <scope>ALTERNATIVE SPLICING</scope>
    <source>
        <tissue>Brain</tissue>
    </source>
</reference>
<reference key="4">
    <citation type="journal article" date="2011" name="Exp. Cell Res.">
        <title>Identification of T-cell factor-4 isoforms that contribute to the malignant phenotype of hepatocellular carcinoma cells.</title>
        <authorList>
            <person name="Tsedensodnom O."/>
            <person name="Koga H."/>
            <person name="Rosenberg S.A."/>
            <person name="Nambotin S.B."/>
            <person name="Carroll J.J."/>
            <person name="Wands J.R."/>
            <person name="Kim M."/>
        </authorList>
    </citation>
    <scope>NUCLEOTIDE SEQUENCE [MRNA] (ISOFORMS 1; 6; 9; 13; 14; 15 AND 17)</scope>
    <scope>ALTERNATIVE SPLICING</scope>
</reference>
<reference key="5">
    <citation type="submission" date="2008-06" db="EMBL/GenBank/DDBJ databases">
        <title>ALEX1, a putative tumor suppressor, is regulated by CREB-dependent Wnt signaling, and is silenced by promoter methylation in human colorectal cancer.</title>
        <authorList>
            <person name="Iseki H."/>
            <person name="Takeda A."/>
            <person name="Andou T."/>
            <person name="Takahashi N."/>
            <person name="Ban S."/>
            <person name="Kurochkin I.V."/>
            <person name="Okazaki Y."/>
            <person name="Koyama I."/>
        </authorList>
    </citation>
    <scope>NUCLEOTIDE SEQUENCE [MRNA] (ISOFORM 9)</scope>
    <source>
        <tissue>Colon</tissue>
    </source>
</reference>
<reference key="6">
    <citation type="journal article" date="2004" name="Nat. Genet.">
        <title>Complete sequencing and characterization of 21,243 full-length human cDNAs.</title>
        <authorList>
            <person name="Ota T."/>
            <person name="Suzuki Y."/>
            <person name="Nishikawa T."/>
            <person name="Otsuki T."/>
            <person name="Sugiyama T."/>
            <person name="Irie R."/>
            <person name="Wakamatsu A."/>
            <person name="Hayashi K."/>
            <person name="Sato H."/>
            <person name="Nagai K."/>
            <person name="Kimura K."/>
            <person name="Makita H."/>
            <person name="Sekine M."/>
            <person name="Obayashi M."/>
            <person name="Nishi T."/>
            <person name="Shibahara T."/>
            <person name="Tanaka T."/>
            <person name="Ishii S."/>
            <person name="Yamamoto J."/>
            <person name="Saito K."/>
            <person name="Kawai Y."/>
            <person name="Isono Y."/>
            <person name="Nakamura Y."/>
            <person name="Nagahari K."/>
            <person name="Murakami K."/>
            <person name="Yasuda T."/>
            <person name="Iwayanagi T."/>
            <person name="Wagatsuma M."/>
            <person name="Shiratori A."/>
            <person name="Sudo H."/>
            <person name="Hosoiri T."/>
            <person name="Kaku Y."/>
            <person name="Kodaira H."/>
            <person name="Kondo H."/>
            <person name="Sugawara M."/>
            <person name="Takahashi M."/>
            <person name="Kanda K."/>
            <person name="Yokoi T."/>
            <person name="Furuya T."/>
            <person name="Kikkawa E."/>
            <person name="Omura Y."/>
            <person name="Abe K."/>
            <person name="Kamihara K."/>
            <person name="Katsuta N."/>
            <person name="Sato K."/>
            <person name="Tanikawa M."/>
            <person name="Yamazaki M."/>
            <person name="Ninomiya K."/>
            <person name="Ishibashi T."/>
            <person name="Yamashita H."/>
            <person name="Murakawa K."/>
            <person name="Fujimori K."/>
            <person name="Tanai H."/>
            <person name="Kimata M."/>
            <person name="Watanabe M."/>
            <person name="Hiraoka S."/>
            <person name="Chiba Y."/>
            <person name="Ishida S."/>
            <person name="Ono Y."/>
            <person name="Takiguchi S."/>
            <person name="Watanabe S."/>
            <person name="Yosida M."/>
            <person name="Hotuta T."/>
            <person name="Kusano J."/>
            <person name="Kanehori K."/>
            <person name="Takahashi-Fujii A."/>
            <person name="Hara H."/>
            <person name="Tanase T.-O."/>
            <person name="Nomura Y."/>
            <person name="Togiya S."/>
            <person name="Komai F."/>
            <person name="Hara R."/>
            <person name="Takeuchi K."/>
            <person name="Arita M."/>
            <person name="Imose N."/>
            <person name="Musashino K."/>
            <person name="Yuuki H."/>
            <person name="Oshima A."/>
            <person name="Sasaki N."/>
            <person name="Aotsuka S."/>
            <person name="Yoshikawa Y."/>
            <person name="Matsunawa H."/>
            <person name="Ichihara T."/>
            <person name="Shiohata N."/>
            <person name="Sano S."/>
            <person name="Moriya S."/>
            <person name="Momiyama H."/>
            <person name="Satoh N."/>
            <person name="Takami S."/>
            <person name="Terashima Y."/>
            <person name="Suzuki O."/>
            <person name="Nakagawa S."/>
            <person name="Senoh A."/>
            <person name="Mizoguchi H."/>
            <person name="Goto Y."/>
            <person name="Shimizu F."/>
            <person name="Wakebe H."/>
            <person name="Hishigaki H."/>
            <person name="Watanabe T."/>
            <person name="Sugiyama A."/>
            <person name="Takemoto M."/>
            <person name="Kawakami B."/>
            <person name="Yamazaki M."/>
            <person name="Watanabe K."/>
            <person name="Kumagai A."/>
            <person name="Itakura S."/>
            <person name="Fukuzumi Y."/>
            <person name="Fujimori Y."/>
            <person name="Komiyama M."/>
            <person name="Tashiro H."/>
            <person name="Tanigami A."/>
            <person name="Fujiwara T."/>
            <person name="Ono T."/>
            <person name="Yamada K."/>
            <person name="Fujii Y."/>
            <person name="Ozaki K."/>
            <person name="Hirao M."/>
            <person name="Ohmori Y."/>
            <person name="Kawabata A."/>
            <person name="Hikiji T."/>
            <person name="Kobatake N."/>
            <person name="Inagaki H."/>
            <person name="Ikema Y."/>
            <person name="Okamoto S."/>
            <person name="Okitani R."/>
            <person name="Kawakami T."/>
            <person name="Noguchi S."/>
            <person name="Itoh T."/>
            <person name="Shigeta K."/>
            <person name="Senba T."/>
            <person name="Matsumura K."/>
            <person name="Nakajima Y."/>
            <person name="Mizuno T."/>
            <person name="Morinaga M."/>
            <person name="Sasaki M."/>
            <person name="Togashi T."/>
            <person name="Oyama M."/>
            <person name="Hata H."/>
            <person name="Watanabe M."/>
            <person name="Komatsu T."/>
            <person name="Mizushima-Sugano J."/>
            <person name="Satoh T."/>
            <person name="Shirai Y."/>
            <person name="Takahashi Y."/>
            <person name="Nakagawa K."/>
            <person name="Okumura K."/>
            <person name="Nagase T."/>
            <person name="Nomura N."/>
            <person name="Kikuchi H."/>
            <person name="Masuho Y."/>
            <person name="Yamashita R."/>
            <person name="Nakai K."/>
            <person name="Yada T."/>
            <person name="Nakamura Y."/>
            <person name="Ohara O."/>
            <person name="Isogai T."/>
            <person name="Sugano S."/>
        </authorList>
    </citation>
    <scope>NUCLEOTIDE SEQUENCE [LARGE SCALE MRNA] (ISOFORM 14)</scope>
</reference>
<reference key="7">
    <citation type="journal article" date="2004" name="Nature">
        <title>The DNA sequence and comparative analysis of human chromosome 10.</title>
        <authorList>
            <person name="Deloukas P."/>
            <person name="Earthrowl M.E."/>
            <person name="Grafham D.V."/>
            <person name="Rubenfield M."/>
            <person name="French L."/>
            <person name="Steward C.A."/>
            <person name="Sims S.K."/>
            <person name="Jones M.C."/>
            <person name="Searle S."/>
            <person name="Scott C."/>
            <person name="Howe K."/>
            <person name="Hunt S.E."/>
            <person name="Andrews T.D."/>
            <person name="Gilbert J.G.R."/>
            <person name="Swarbreck D."/>
            <person name="Ashurst J.L."/>
            <person name="Taylor A."/>
            <person name="Battles J."/>
            <person name="Bird C.P."/>
            <person name="Ainscough R."/>
            <person name="Almeida J.P."/>
            <person name="Ashwell R.I.S."/>
            <person name="Ambrose K.D."/>
            <person name="Babbage A.K."/>
            <person name="Bagguley C.L."/>
            <person name="Bailey J."/>
            <person name="Banerjee R."/>
            <person name="Bates K."/>
            <person name="Beasley H."/>
            <person name="Bray-Allen S."/>
            <person name="Brown A.J."/>
            <person name="Brown J.Y."/>
            <person name="Burford D.C."/>
            <person name="Burrill W."/>
            <person name="Burton J."/>
            <person name="Cahill P."/>
            <person name="Camire D."/>
            <person name="Carter N.P."/>
            <person name="Chapman J.C."/>
            <person name="Clark S.Y."/>
            <person name="Clarke G."/>
            <person name="Clee C.M."/>
            <person name="Clegg S."/>
            <person name="Corby N."/>
            <person name="Coulson A."/>
            <person name="Dhami P."/>
            <person name="Dutta I."/>
            <person name="Dunn M."/>
            <person name="Faulkner L."/>
            <person name="Frankish A."/>
            <person name="Frankland J.A."/>
            <person name="Garner P."/>
            <person name="Garnett J."/>
            <person name="Gribble S."/>
            <person name="Griffiths C."/>
            <person name="Grocock R."/>
            <person name="Gustafson E."/>
            <person name="Hammond S."/>
            <person name="Harley J.L."/>
            <person name="Hart E."/>
            <person name="Heath P.D."/>
            <person name="Ho T.P."/>
            <person name="Hopkins B."/>
            <person name="Horne J."/>
            <person name="Howden P.J."/>
            <person name="Huckle E."/>
            <person name="Hynds C."/>
            <person name="Johnson C."/>
            <person name="Johnson D."/>
            <person name="Kana A."/>
            <person name="Kay M."/>
            <person name="Kimberley A.M."/>
            <person name="Kershaw J.K."/>
            <person name="Kokkinaki M."/>
            <person name="Laird G.K."/>
            <person name="Lawlor S."/>
            <person name="Lee H.M."/>
            <person name="Leongamornlert D.A."/>
            <person name="Laird G."/>
            <person name="Lloyd C."/>
            <person name="Lloyd D.M."/>
            <person name="Loveland J."/>
            <person name="Lovell J."/>
            <person name="McLaren S."/>
            <person name="McLay K.E."/>
            <person name="McMurray A."/>
            <person name="Mashreghi-Mohammadi M."/>
            <person name="Matthews L."/>
            <person name="Milne S."/>
            <person name="Nickerson T."/>
            <person name="Nguyen M."/>
            <person name="Overton-Larty E."/>
            <person name="Palmer S.A."/>
            <person name="Pearce A.V."/>
            <person name="Peck A.I."/>
            <person name="Pelan S."/>
            <person name="Phillimore B."/>
            <person name="Porter K."/>
            <person name="Rice C.M."/>
            <person name="Rogosin A."/>
            <person name="Ross M.T."/>
            <person name="Sarafidou T."/>
            <person name="Sehra H.K."/>
            <person name="Shownkeen R."/>
            <person name="Skuce C.D."/>
            <person name="Smith M."/>
            <person name="Standring L."/>
            <person name="Sycamore N."/>
            <person name="Tester J."/>
            <person name="Thorpe A."/>
            <person name="Torcasso W."/>
            <person name="Tracey A."/>
            <person name="Tromans A."/>
            <person name="Tsolas J."/>
            <person name="Wall M."/>
            <person name="Walsh J."/>
            <person name="Wang H."/>
            <person name="Weinstock K."/>
            <person name="West A.P."/>
            <person name="Willey D.L."/>
            <person name="Whitehead S.L."/>
            <person name="Wilming L."/>
            <person name="Wray P.W."/>
            <person name="Young L."/>
            <person name="Chen Y."/>
            <person name="Lovering R.C."/>
            <person name="Moschonas N.K."/>
            <person name="Siebert R."/>
            <person name="Fechtel K."/>
            <person name="Bentley D."/>
            <person name="Durbin R.M."/>
            <person name="Hubbard T."/>
            <person name="Doucette-Stamm L."/>
            <person name="Beck S."/>
            <person name="Smith D.R."/>
            <person name="Rogers J."/>
        </authorList>
    </citation>
    <scope>NUCLEOTIDE SEQUENCE [LARGE SCALE GENOMIC DNA]</scope>
</reference>
<reference key="8">
    <citation type="submission" date="2005-09" db="EMBL/GenBank/DDBJ databases">
        <authorList>
            <person name="Mural R.J."/>
            <person name="Istrail S."/>
            <person name="Sutton G."/>
            <person name="Florea L."/>
            <person name="Halpern A.L."/>
            <person name="Mobarry C.M."/>
            <person name="Lippert R."/>
            <person name="Walenz B."/>
            <person name="Shatkay H."/>
            <person name="Dew I."/>
            <person name="Miller J.R."/>
            <person name="Flanigan M.J."/>
            <person name="Edwards N.J."/>
            <person name="Bolanos R."/>
            <person name="Fasulo D."/>
            <person name="Halldorsson B.V."/>
            <person name="Hannenhalli S."/>
            <person name="Turner R."/>
            <person name="Yooseph S."/>
            <person name="Lu F."/>
            <person name="Nusskern D.R."/>
            <person name="Shue B.C."/>
            <person name="Zheng X.H."/>
            <person name="Zhong F."/>
            <person name="Delcher A.L."/>
            <person name="Huson D.H."/>
            <person name="Kravitz S.A."/>
            <person name="Mouchard L."/>
            <person name="Reinert K."/>
            <person name="Remington K.A."/>
            <person name="Clark A.G."/>
            <person name="Waterman M.S."/>
            <person name="Eichler E.E."/>
            <person name="Adams M.D."/>
            <person name="Hunkapiller M.W."/>
            <person name="Myers E.W."/>
            <person name="Venter J.C."/>
        </authorList>
    </citation>
    <scope>NUCLEOTIDE SEQUENCE [LARGE SCALE GENOMIC DNA]</scope>
</reference>
<reference key="9">
    <citation type="journal article" date="2004" name="Genome Res.">
        <title>The status, quality, and expansion of the NIH full-length cDNA project: the Mammalian Gene Collection (MGC).</title>
        <authorList>
            <consortium name="The MGC Project Team"/>
        </authorList>
    </citation>
    <scope>NUCLEOTIDE SEQUENCE [LARGE SCALE MRNA] (ISOFORM 10)</scope>
    <source>
        <tissue>Uterus</tissue>
    </source>
</reference>
<reference key="10">
    <citation type="submission" date="1999-11" db="EMBL/GenBank/DDBJ databases">
        <title>Human TCF-4 splice form B.</title>
        <authorList>
            <person name="Saeki H."/>
            <person name="Tanaka S."/>
            <person name="Sugimachi K."/>
        </authorList>
    </citation>
    <scope>NUCLEOTIDE SEQUENCE [MRNA] OF 449-494</scope>
    <source>
        <tissue>Gastric carcinoma</tissue>
    </source>
</reference>
<reference key="11">
    <citation type="journal article" date="1998" name="Science">
        <title>Identification of c-MYC as a target of the APC pathway.</title>
        <authorList>
            <person name="He T.-C."/>
            <person name="Sparks A.B."/>
            <person name="Rago C."/>
            <person name="Hermeking H."/>
            <person name="Zawel L."/>
            <person name="da Costa L.T."/>
            <person name="Morin P.J."/>
            <person name="Vogelstein B."/>
            <person name="Kinzler K.W."/>
        </authorList>
    </citation>
    <scope>FUNCTION</scope>
</reference>
<reference key="12">
    <citation type="journal article" date="1999" name="Am. J. Pathol.">
        <title>Restricted high level expression of Tcf-4 protein in intestinal and mammary gland epithelium.</title>
        <authorList>
            <person name="Barker N."/>
            <person name="Huls G."/>
            <person name="Korinek V."/>
            <person name="Clevers H."/>
        </authorList>
    </citation>
    <scope>TISSUE SPECIFICITY</scope>
    <scope>INTERACTION WITH CTNNB1</scope>
    <scope>SUBCELLULAR LOCATION</scope>
</reference>
<reference key="13">
    <citation type="journal article" date="1999" name="Biochem. Biophys. Res. Commun.">
        <title>Identification of Tcf4 residues involved in high-affinity beta-catenin binding.</title>
        <authorList>
            <person name="Omer C.A."/>
            <person name="Miller P.J."/>
            <person name="Diehl R.E."/>
            <person name="Kral A.M."/>
        </authorList>
    </citation>
    <scope>INTERACTION WITH CTNNB1</scope>
    <scope>MUTAGENESIS OF 10-ASP-ASP-11; ASP-16; GLU-17; 23-ASP-GLU-24 AND LEU-48</scope>
</reference>
<reference key="14">
    <citation type="journal article" date="2001" name="Nucleic Acids Res.">
        <title>All Tcf HMG box transcription factors interact with Groucho-related co-repressors.</title>
        <authorList>
            <person name="Brantjes H."/>
            <person name="Roose J."/>
            <person name="van De Wetering M."/>
            <person name="Clevers H."/>
        </authorList>
    </citation>
    <scope>INTERACTION WITH TLE1; TLE2; TLE3 AND TLE4</scope>
</reference>
<reference key="15">
    <citation type="journal article" date="2002" name="Cell">
        <title>The beta-catenin/TCF-4 complex imposes a crypt progenitor phenotype on colorectal cancer cells.</title>
        <authorList>
            <person name="van de Wetering M."/>
            <person name="Sancho E."/>
            <person name="Verweij C."/>
            <person name="de Lau W."/>
            <person name="Oving I."/>
            <person name="Hurlstone A."/>
            <person name="van der Horn K."/>
            <person name="Batlle E."/>
            <person name="Coudreuse D."/>
            <person name="Haramis A.-P."/>
            <person name="Tjon-Pon-Fong M."/>
            <person name="Moerer P."/>
            <person name="van den Born M."/>
            <person name="Soete G."/>
            <person name="Pals S."/>
            <person name="Eilers M."/>
            <person name="Medema R."/>
            <person name="Clevers H."/>
        </authorList>
    </citation>
    <scope>FUNCTION</scope>
</reference>
<reference key="16">
    <citation type="journal article" date="2003" name="EMBO J.">
        <title>Sumoylation is involved in beta-catenin-dependent activation of Tcf-4.</title>
        <authorList>
            <person name="Yamamoto H."/>
            <person name="Ihara M."/>
            <person name="Matsuura Y."/>
            <person name="Kikuchi A."/>
        </authorList>
    </citation>
    <scope>SUMOYLATION AT LYS-320</scope>
    <scope>INTERACTION WITH PIAS4</scope>
    <scope>FUNCTION</scope>
    <scope>SUBCELLULAR LOCATION</scope>
    <scope>MUTAGENESIS OF LYS-320 AND GLU-322</scope>
</reference>
<reference key="17">
    <citation type="journal article" date="2003" name="J. Biol. Chem.">
        <title>Identification of a promoter-specific transcriptional activation domain at the C-terminus of the Wnt effector protein T-cell factor 4.</title>
        <authorList>
            <person name="Hecht A."/>
            <person name="Stemmler M.P."/>
        </authorList>
    </citation>
    <scope>INTERACTION WITH EP300</scope>
</reference>
<reference key="18">
    <citation type="journal article" date="2003" name="Mol. Cell. Biol.">
        <title>Regulation of lymphoid enhancer factor 1/T-cell factor by mitogen-activated protein kinase-related Nemo-like kinase-dependent phosphorylation in Wnt/beta-catenin signaling.</title>
        <authorList>
            <person name="Ishitani T."/>
            <person name="Ninomiya-Tsuji J."/>
            <person name="Matsumoto K."/>
        </authorList>
    </citation>
    <scope>INTERACTION WITH NLK</scope>
    <scope>PHOSPHORYLATION AT THR-201 AND/OR THR-212 BY NLK</scope>
    <scope>MUTAGENESIS OF THR-201 AND THR-212</scope>
</reference>
<reference key="19">
    <citation type="journal article" date="2006" name="J. Biol. Chem.">
        <title>NARF, an nemo-like kinase (NLK)-associated ring finger protein regulates the ubiquitylation and degradation of T cell factor/lymphoid enhancer factor (TCF/LEF).</title>
        <authorList>
            <person name="Yamada M."/>
            <person name="Ohnishi J."/>
            <person name="Ohkawara B."/>
            <person name="Iemura S."/>
            <person name="Satoh K."/>
            <person name="Hyodo-Miura J."/>
            <person name="Kawachi K."/>
            <person name="Natsume T."/>
            <person name="Shibuya H."/>
        </authorList>
    </citation>
    <scope>INTERACTION WITH NLK</scope>
</reference>
<reference key="20">
    <citation type="journal article" date="2006" name="Nat. Genet.">
        <title>Variant of transcription factor 7-like 2 (TCF7L2) gene confers risk of type 2 diabetes.</title>
        <authorList>
            <person name="Grant S.F.A."/>
            <person name="Thorleifsson G."/>
            <person name="Reynisdottir I."/>
            <person name="Benediktsson R."/>
            <person name="Manolescu A."/>
            <person name="Sainz J."/>
            <person name="Helgason A."/>
            <person name="Stefansson H."/>
            <person name="Emilsson V."/>
            <person name="Helgadottir A."/>
            <person name="Styrkarsdottir U."/>
            <person name="Magnusson K.P."/>
            <person name="Walters G.B."/>
            <person name="Palsdottir E."/>
            <person name="Jonsdottir T."/>
            <person name="Gudmundsdottir T."/>
            <person name="Gylfason A."/>
            <person name="Saemundsdottir J."/>
            <person name="Wilensky R.L."/>
            <person name="Reilly M.P."/>
            <person name="Rader D.J."/>
            <person name="Bagger Y."/>
            <person name="Christiansen C."/>
            <person name="Gudnason V."/>
            <person name="Sigurdsson G."/>
            <person name="Thorsteinsdottir U."/>
            <person name="Gulcher J.R."/>
            <person name="Kong A."/>
            <person name="Stefansson K."/>
        </authorList>
    </citation>
    <scope>INVOLVEMENT IN T2D</scope>
</reference>
<reference key="21">
    <citation type="journal article" date="2006" name="Oncogene">
        <title>The C/EBP homologous protein CHOP (GADD153) is an inhibitor of Wnt/TCF signals.</title>
        <authorList>
            <person name="Horndasch M."/>
            <person name="Lienkamp S."/>
            <person name="Springer E."/>
            <person name="Schmitt A."/>
            <person name="Pavenstaedt H."/>
            <person name="Walz G."/>
            <person name="Gloy J."/>
        </authorList>
    </citation>
    <scope>INTERACTION WITH DDIT3</scope>
</reference>
<reference key="22">
    <citation type="journal article" date="2008" name="Oncogene">
        <title>Coiled-coil domain containing 85B suppresses the beta-catenin activity in a p53-dependent manner.</title>
        <authorList>
            <person name="Iwai A."/>
            <person name="Hijikata M."/>
            <person name="Hishiki T."/>
            <person name="Isono O."/>
            <person name="Chiba T."/>
            <person name="Shimotohno K."/>
        </authorList>
    </citation>
    <scope>INTERACTION WITH CCDC85B</scope>
</reference>
<reference key="23">
    <citation type="journal article" date="2009" name="EMBO J.">
        <title>The kinase TNIK is an essential activator of Wnt target genes.</title>
        <authorList>
            <person name="Mahmoudi T."/>
            <person name="Li V.S.W."/>
            <person name="Ng S.S."/>
            <person name="Taouatas N."/>
            <person name="Vries R.G.J."/>
            <person name="Mohammed S."/>
            <person name="Heck A.J."/>
            <person name="Clevers H."/>
        </authorList>
    </citation>
    <scope>INTERACTION WITH TNIK AND CTNNB1</scope>
</reference>
<reference key="24">
    <citation type="journal article" date="2009" name="J. Biol. Chem.">
        <title>MAD2B, a novel TCF4-binding protein, modulates TCF4-mediated epithelial-mesenchymal transdifferentiation.</title>
        <authorList>
            <person name="Hong C.F."/>
            <person name="Chou Y.T."/>
            <person name="Lin Y.S."/>
            <person name="Wu C.W."/>
        </authorList>
    </citation>
    <scope>FUNCTION</scope>
    <scope>INTERACTION WITH MAD2L2</scope>
</reference>
<reference key="25">
    <citation type="journal article" date="2009" name="Nucleic Acids Res.">
        <title>Dazap2 modulates transcription driven by the Wnt effector TCF-4.</title>
        <authorList>
            <person name="Lukas J."/>
            <person name="Mazna P."/>
            <person name="Valenta T."/>
            <person name="Doubravska L."/>
            <person name="Pospichalova V."/>
            <person name="Vojtechova M."/>
            <person name="Fafilek B."/>
            <person name="Ivanek R."/>
            <person name="Plachy J."/>
            <person name="Novak J."/>
            <person name="Korinek V."/>
        </authorList>
    </citation>
    <scope>INTERACTION WITH DAZAP2</scope>
    <scope>SUBCELLULAR LOCATION</scope>
</reference>
<reference key="26">
    <citation type="journal article" date="2011" name="J. Biol. Chem.">
        <title>Zipper-interacting protein kinase (ZIPK) modulates canonical Wnt/beta-catenin signaling through interaction with Nemo-like kinase and T-cell factor 4 (NLK/TCF4).</title>
        <authorList>
            <person name="Togi S."/>
            <person name="Ikeda O."/>
            <person name="Kamitani S."/>
            <person name="Nakasuji M."/>
            <person name="Sekine Y."/>
            <person name="Muromoto R."/>
            <person name="Nanbo A."/>
            <person name="Oritani K."/>
            <person name="Kawai T."/>
            <person name="Akira S."/>
            <person name="Matsuda T."/>
        </authorList>
    </citation>
    <scope>INTERACTION WITH NLK AND ZIPK/DAPK3</scope>
</reference>
<reference key="27">
    <citation type="journal article" date="2012" name="EMBO Rep.">
        <title>Kindlin 2 forms a transcriptional complex with beta-catenin and TCF4 to enhance Wnt signalling.</title>
        <authorList>
            <person name="Yu Y."/>
            <person name="Wu J."/>
            <person name="Wang Y."/>
            <person name="Zhao T."/>
            <person name="Ma B."/>
            <person name="Liu Y."/>
            <person name="Fang W."/>
            <person name="Zhu W.G."/>
            <person name="Zhang H."/>
        </authorList>
    </citation>
    <scope>FUNCTION</scope>
    <scope>IDENTIFICATION IN A COMPLEX WITH FERMT2 AND CTNNB1</scope>
    <scope>SUBCELLULAR LOCATION</scope>
</reference>
<reference key="28">
    <citation type="journal article" date="2012" name="Gastroenterology">
        <title>Beta-catenin inhibits promyelocytic leukemia protein tumor suppressor function in colorectal cancer cells.</title>
        <authorList>
            <person name="Satow R."/>
            <person name="Shitashige M."/>
            <person name="Jigami T."/>
            <person name="Fukami K."/>
            <person name="Honda K."/>
            <person name="Kitabayashi I."/>
            <person name="Yamada T."/>
        </authorList>
    </citation>
    <scope>INTERACTION WITH PML</scope>
</reference>
<reference key="29">
    <citation type="journal article" date="2012" name="Mol. Cancer Res.">
        <title>SPINDLIN1 promotes cancer cell proliferation through activation of WNT/TCF-4 signaling.</title>
        <authorList>
            <person name="Wang J.X."/>
            <person name="Zeng Q."/>
            <person name="Chen L."/>
            <person name="Du J.C."/>
            <person name="Yan X.L."/>
            <person name="Yuan H.F."/>
            <person name="Zhai C."/>
            <person name="Zhou J.N."/>
            <person name="Jia Y.L."/>
            <person name="Yue W."/>
            <person name="Pei X.T."/>
        </authorList>
    </citation>
    <scope>INTERACTION WITH SPIN1</scope>
</reference>
<reference key="30">
    <citation type="journal article" date="2012" name="Mol. Cell">
        <title>XIAP monoubiquitylates Groucho/TLE to promote canonical Wnt signaling.</title>
        <authorList>
            <person name="Hanson A.J."/>
            <person name="Wallace H.A."/>
            <person name="Freeman T.J."/>
            <person name="Beauchamp R.D."/>
            <person name="Lee L.A."/>
            <person name="Lee E."/>
        </authorList>
    </citation>
    <scope>INTERACTION WITH XIAP/BIRC4 AND TLE3</scope>
</reference>
<reference key="31">
    <citation type="journal article" date="2014" name="Genes Dev.">
        <title>Molecular basis underlying histone H3 lysine-arginine methylation pattern readout by Spin/Ssty repeats of Spindlin1.</title>
        <authorList>
            <person name="Su X."/>
            <person name="Zhu G."/>
            <person name="Ding X."/>
            <person name="Lee S.Y."/>
            <person name="Dou Y."/>
            <person name="Zhu B."/>
            <person name="Wu W."/>
            <person name="Li H."/>
        </authorList>
    </citation>
    <scope>INTERACTION WITH SPIN1</scope>
</reference>
<reference key="32">
    <citation type="journal article" date="2014" name="J. Proteomics">
        <title>An enzyme assisted RP-RPLC approach for in-depth analysis of human liver phosphoproteome.</title>
        <authorList>
            <person name="Bian Y."/>
            <person name="Song C."/>
            <person name="Cheng K."/>
            <person name="Dong M."/>
            <person name="Wang F."/>
            <person name="Huang J."/>
            <person name="Sun D."/>
            <person name="Wang L."/>
            <person name="Ye M."/>
            <person name="Zou H."/>
        </authorList>
    </citation>
    <scope>IDENTIFICATION BY MASS SPECTROMETRY [LARGE SCALE ANALYSIS]</scope>
    <source>
        <tissue>Liver</tissue>
    </source>
</reference>
<reference key="33">
    <citation type="journal article" date="2014" name="Nature">
        <title>Sequence variants in SLC16A11 are a common risk factor for type 2 diabetes in Mexico.</title>
        <authorList>
            <consortium name="The SIGMA Type 2 Diabetes Consortium"/>
        </authorList>
    </citation>
    <scope>INVOLVEMENT IN T2D</scope>
</reference>
<reference key="34">
    <citation type="journal article" date="2017" name="Cell Res.">
        <title>Twa1/Gid8 is a beta-catenin nuclear retention factor in Wnt signaling and colorectal tumorigenesis.</title>
        <authorList>
            <person name="Lu Y."/>
            <person name="Xie S."/>
            <person name="Zhang W."/>
            <person name="Zhang C."/>
            <person name="Gao C."/>
            <person name="Sun Q."/>
            <person name="Cai Y."/>
            <person name="Xu Z."/>
            <person name="Xiao M."/>
            <person name="Xu Y."/>
            <person name="Huang X."/>
            <person name="Wu X."/>
            <person name="Liu W."/>
            <person name="Wang F."/>
            <person name="Kang Y."/>
            <person name="Zhou T."/>
        </authorList>
    </citation>
    <scope>INTERACTION WITH CTNNB1</scope>
</reference>
<reference key="35">
    <citation type="journal article" date="2017" name="J. Biol. Chem.">
        <title>A transcriptional coregulator, SPIN-DOC, attenuates the coactivator activity of Spindlin1.</title>
        <authorList>
            <person name="Bae N."/>
            <person name="Gao M."/>
            <person name="Li X."/>
            <person name="Premkumar T."/>
            <person name="Sbardella G."/>
            <person name="Chen J."/>
            <person name="Bedford M.T."/>
        </authorList>
    </citation>
    <scope>INTERACTION WITH C11ORF84/SPINDOC AND SPIN1</scope>
</reference>
<reference key="36">
    <citation type="journal article" date="2017" name="Nat. Struct. Mol. Biol.">
        <title>Site-specific mapping of the human SUMO proteome reveals co-modification with phosphorylation.</title>
        <authorList>
            <person name="Hendriks I.A."/>
            <person name="Lyon D."/>
            <person name="Young C."/>
            <person name="Jensen L.J."/>
            <person name="Vertegaal A.C."/>
            <person name="Nielsen M.L."/>
        </authorList>
    </citation>
    <scope>SUMOYLATION [LARGE SCALE ANALYSIS] AT LYS-22 AND LYS-539</scope>
    <scope>IDENTIFICATION BY MASS SPECTROMETRY [LARGE SCALE ANALYSIS]</scope>
</reference>
<reference key="37">
    <citation type="journal article" date="2018" name="EBioMedicine">
        <title>SOX30 Inhibits Tumor Metastasis through Attenuating Wnt-Signaling via Transcriptional and Posttranslational Regulation of beta-Catenin in Lung Cancer.</title>
        <authorList>
            <person name="Han F."/>
            <person name="Liu W.B."/>
            <person name="Shi X.Y."/>
            <person name="Yang J.T."/>
            <person name="Zhang X."/>
            <person name="Li Z.M."/>
            <person name="Jiang X."/>
            <person name="Yin L."/>
            <person name="Li J.J."/>
            <person name="Huang C.S."/>
            <person name="Cao J."/>
            <person name="Liu J.Y."/>
        </authorList>
    </citation>
    <scope>INTERACTION WITH CTNNB1</scope>
</reference>
<reference key="38">
    <citation type="journal article" date="2001" name="Nat. Struct. Biol.">
        <title>Tcf4 can specifically recognize beta-catenin using alternative conformations.</title>
        <authorList>
            <person name="Graham T.A."/>
            <person name="Ferkey D.M."/>
            <person name="Mao F."/>
            <person name="Kimelman D."/>
            <person name="Xu W."/>
        </authorList>
    </citation>
    <scope>X-RAY CRYSTALLOGRAPHY (1.9 ANGSTROMS) OF 12-49 IN COMPLEX WITH THE ARMADILLO REPEAT REGION OF CTNNB1</scope>
    <scope>MUTAGENESIS OF GLU-24; GLU-26; GLU-28 AND GLU-29</scope>
</reference>
<reference key="39">
    <citation type="journal article" date="2001" name="Nat. Struct. Biol.">
        <title>Structure of a human Tcf4-beta-catenin complex.</title>
        <authorList>
            <person name="Poy F."/>
            <person name="Lepourcelet M."/>
            <person name="Shivdasani R.A."/>
            <person name="Eck M.J."/>
        </authorList>
    </citation>
    <scope>X-RAY CRYSTALLOGRAPHY (2.5 ANGSTROMS) OF 8-54 IN COMPLEX WITH THE ARMADILLO REPEAT REGION OF CTNNB1</scope>
    <scope>MUTAGENESIS OF ILE-19 AND PHE-21</scope>
</reference>
<reference key="40">
    <citation type="journal article" date="2006" name="Mol. Cell">
        <title>Crystal structure of a beta-catenin/BCL9/Tcf4 complex.</title>
        <authorList>
            <person name="Sampietro J."/>
            <person name="Dahlberg C.L."/>
            <person name="Cho U.S."/>
            <person name="Hinds T.R."/>
            <person name="Kimelman D."/>
            <person name="Xu W."/>
        </authorList>
    </citation>
    <scope>X-RAY CRYSTALLOGRAPHY (2.60 ANGSTROMS) OF 1-53 IN COMPLEX WITH BCL9 AND CTNNB1</scope>
    <scope>INTERACTION WITH CTNNB1</scope>
</reference>
<reference key="41">
    <citation type="journal article" date="2006" name="Science">
        <title>The consensus coding sequences of human breast and colorectal cancers.</title>
        <authorList>
            <person name="Sjoeblom T."/>
            <person name="Jones S."/>
            <person name="Wood L.D."/>
            <person name="Parsons D.W."/>
            <person name="Lin J."/>
            <person name="Barber T.D."/>
            <person name="Mandelker D."/>
            <person name="Leary R.J."/>
            <person name="Ptak J."/>
            <person name="Silliman N."/>
            <person name="Szabo S."/>
            <person name="Buckhaults P."/>
            <person name="Farrell C."/>
            <person name="Meeh P."/>
            <person name="Markowitz S.D."/>
            <person name="Willis J."/>
            <person name="Dawson D."/>
            <person name="Willson J.K.V."/>
            <person name="Gazdar A.F."/>
            <person name="Hartigan J."/>
            <person name="Wu L."/>
            <person name="Liu C."/>
            <person name="Parmigiani G."/>
            <person name="Park B.H."/>
            <person name="Bachman K.E."/>
            <person name="Papadopoulos N."/>
            <person name="Vogelstein B."/>
            <person name="Kinzler K.W."/>
            <person name="Velculescu V.E."/>
        </authorList>
    </citation>
    <scope>VARIANT [LARGE SCALE ANALYSIS] CYS-465</scope>
</reference>
<name>TF7L2_HUMAN</name>